<comment type="function">
    <text evidence="17 21">Plays an important role in galactose metabolism.</text>
</comment>
<comment type="catalytic activity">
    <reaction evidence="17 21">
        <text>alpha-D-galactose 1-phosphate + UDP-alpha-D-glucose = alpha-D-glucose 1-phosphate + UDP-alpha-D-galactose</text>
        <dbReference type="Rhea" id="RHEA:13989"/>
        <dbReference type="ChEBI" id="CHEBI:58336"/>
        <dbReference type="ChEBI" id="CHEBI:58601"/>
        <dbReference type="ChEBI" id="CHEBI:58885"/>
        <dbReference type="ChEBI" id="CHEBI:66914"/>
        <dbReference type="EC" id="2.7.7.12"/>
    </reaction>
</comment>
<comment type="cofactor">
    <cofactor evidence="21">
        <name>Zn(2+)</name>
        <dbReference type="ChEBI" id="CHEBI:29105"/>
    </cofactor>
    <text evidence="35">Binds 2 zinc ions per subunit.</text>
</comment>
<comment type="biophysicochemical properties">
    <kinetics>
        <KM evidence="17">1.25 mM for alpha-D-galactose 1-phosphate (at pH 8.7)</KM>
        <KM evidence="17">0.43 mM for UDP-glucose (at pH 8.7)</KM>
        <Vmax evidence="17">48.0 umol/min/mg enzyme</Vmax>
    </kinetics>
</comment>
<comment type="pathway">
    <text evidence="17 21">Carbohydrate metabolism; galactose metabolism.</text>
</comment>
<comment type="subunit">
    <text evidence="21">Homodimer.</text>
</comment>
<comment type="interaction">
    <interactant intactId="EBI-750827">
        <id>P07902</id>
    </interactant>
    <interactant intactId="EBI-1043499">
        <id>Q9HAV7</id>
        <label>GRPEL1</label>
    </interactant>
    <organismsDiffer>false</organismsDiffer>
    <experiments>3</experiments>
</comment>
<comment type="interaction">
    <interactant intactId="EBI-750827">
        <id>P07902</id>
    </interactant>
    <interactant intactId="EBI-11962084">
        <id>Q3LI66</id>
        <label>KRTAP6-2</label>
    </interactant>
    <organismsDiffer>false</organismsDiffer>
    <experiments>3</experiments>
</comment>
<comment type="interaction">
    <interactant intactId="EBI-750827">
        <id>P07902</id>
    </interactant>
    <interactant intactId="EBI-3989435">
        <id>P15559</id>
        <label>NQO1</label>
    </interactant>
    <organismsDiffer>false</organismsDiffer>
    <experiments>3</experiments>
</comment>
<comment type="interaction">
    <interactant intactId="EBI-750827">
        <id>P07902</id>
    </interactant>
    <interactant intactId="EBI-603457">
        <id>Q07912</id>
        <label>TNK2</label>
    </interactant>
    <organismsDiffer>false</organismsDiffer>
    <experiments>3</experiments>
</comment>
<comment type="interaction">
    <interactant intactId="EBI-750827">
        <id>P07902</id>
    </interactant>
    <interactant intactId="EBI-11994780">
        <id>Q07912-2</id>
        <label>TNK2</label>
    </interactant>
    <organismsDiffer>false</organismsDiffer>
    <experiments>3</experiments>
</comment>
<comment type="interaction">
    <interactant intactId="EBI-750827">
        <id>P07902</id>
    </interactant>
    <interactant intactId="EBI-358993">
        <id>Q15645</id>
        <label>TRIP13</label>
    </interactant>
    <organismsDiffer>false</organismsDiffer>
    <experiments>4</experiments>
</comment>
<comment type="interaction">
    <interactant intactId="EBI-750827">
        <id>P07902</id>
    </interactant>
    <interactant intactId="EBI-12867288">
        <id>Q8WUN7</id>
        <label>UBTD2</label>
    </interactant>
    <organismsDiffer>false</organismsDiffer>
    <experiments>6</experiments>
</comment>
<comment type="alternative products">
    <event type="alternative splicing"/>
    <isoform>
        <id>P07902-1</id>
        <name>1</name>
        <sequence type="displayed"/>
    </isoform>
    <isoform>
        <id>P07902-2</id>
        <name>2</name>
        <sequence type="described" ref="VSP_045604 VSP_045605"/>
    </isoform>
</comment>
<comment type="disease" evidence="3 4 5 6 7 8 10 11 12 13 14 15 16 17 18 19 20 21 22 23 24 25 26 27 28 29 30 31">
    <disease id="DI-01642">
        <name>Galactosemia 1</name>
        <acronym>GALAC1</acronym>
        <description>A form of galactosemia, an inborn error of galactose metabolism typically manifesting in the neonatal period, after ingestion of galactose, with jaundice, hepatosplenomegaly, hepatocellular insufficiency, food intolerance, hypoglycemia, renal tubular dysfunction, muscle hypotonia, sepsis and cataract. GALAC1 inheritance is autosomal recessive.</description>
        <dbReference type="MIM" id="230400"/>
    </disease>
    <text>The disease is caused by variants affecting the gene represented in this entry.</text>
</comment>
<comment type="similarity">
    <text evidence="34">Belongs to the galactose-1-phosphate uridylyltransferase type 1 family.</text>
</comment>
<comment type="online information" name="Galactosemia Proteins Database">
    <link uri="http://bioinformatica.isa.cnr.it/galactosemia-proteins-db/index3.html"/>
</comment>
<organism>
    <name type="scientific">Homo sapiens</name>
    <name type="common">Human</name>
    <dbReference type="NCBI Taxonomy" id="9606"/>
    <lineage>
        <taxon>Eukaryota</taxon>
        <taxon>Metazoa</taxon>
        <taxon>Chordata</taxon>
        <taxon>Craniata</taxon>
        <taxon>Vertebrata</taxon>
        <taxon>Euteleostomi</taxon>
        <taxon>Mammalia</taxon>
        <taxon>Eutheria</taxon>
        <taxon>Euarchontoglires</taxon>
        <taxon>Primates</taxon>
        <taxon>Haplorrhini</taxon>
        <taxon>Catarrhini</taxon>
        <taxon>Hominidae</taxon>
        <taxon>Homo</taxon>
    </lineage>
</organism>
<name>GALT_HUMAN</name>
<evidence type="ECO:0000255" key="1">
    <source>
        <dbReference type="PROSITE-ProRule" id="PRU10033"/>
    </source>
</evidence>
<evidence type="ECO:0000256" key="2">
    <source>
        <dbReference type="SAM" id="MobiDB-lite"/>
    </source>
</evidence>
<evidence type="ECO:0000269" key="3">
    <source>
    </source>
</evidence>
<evidence type="ECO:0000269" key="4">
    <source>
    </source>
</evidence>
<evidence type="ECO:0000269" key="5">
    <source>
    </source>
</evidence>
<evidence type="ECO:0000269" key="6">
    <source>
    </source>
</evidence>
<evidence type="ECO:0000269" key="7">
    <source>
    </source>
</evidence>
<evidence type="ECO:0000269" key="8">
    <source>
    </source>
</evidence>
<evidence type="ECO:0000269" key="9">
    <source>
    </source>
</evidence>
<evidence type="ECO:0000269" key="10">
    <source>
    </source>
</evidence>
<evidence type="ECO:0000269" key="11">
    <source>
    </source>
</evidence>
<evidence type="ECO:0000269" key="12">
    <source>
    </source>
</evidence>
<evidence type="ECO:0000269" key="13">
    <source>
    </source>
</evidence>
<evidence type="ECO:0000269" key="14">
    <source>
    </source>
</evidence>
<evidence type="ECO:0000269" key="15">
    <source>
    </source>
</evidence>
<evidence type="ECO:0000269" key="16">
    <source>
    </source>
</evidence>
<evidence type="ECO:0000269" key="17">
    <source>
    </source>
</evidence>
<evidence type="ECO:0000269" key="18">
    <source>
    </source>
</evidence>
<evidence type="ECO:0000269" key="19">
    <source>
    </source>
</evidence>
<evidence type="ECO:0000269" key="20">
    <source>
    </source>
</evidence>
<evidence type="ECO:0000269" key="21">
    <source>
    </source>
</evidence>
<evidence type="ECO:0000269" key="22">
    <source>
    </source>
</evidence>
<evidence type="ECO:0000269" key="23">
    <source>
    </source>
</evidence>
<evidence type="ECO:0000269" key="24">
    <source>
    </source>
</evidence>
<evidence type="ECO:0000269" key="25">
    <source>
    </source>
</evidence>
<evidence type="ECO:0000269" key="26">
    <source>
    </source>
</evidence>
<evidence type="ECO:0000269" key="27">
    <source>
    </source>
</evidence>
<evidence type="ECO:0000269" key="28">
    <source>
    </source>
</evidence>
<evidence type="ECO:0000269" key="29">
    <source>
    </source>
</evidence>
<evidence type="ECO:0000269" key="30">
    <source>
    </source>
</evidence>
<evidence type="ECO:0000269" key="31">
    <source>
    </source>
</evidence>
<evidence type="ECO:0000269" key="32">
    <source ref="4"/>
</evidence>
<evidence type="ECO:0000303" key="33">
    <source>
    </source>
</evidence>
<evidence type="ECO:0000305" key="34"/>
<evidence type="ECO:0000305" key="35">
    <source>
    </source>
</evidence>
<evidence type="ECO:0007744" key="36">
    <source>
        <dbReference type="PDB" id="5IN3"/>
    </source>
</evidence>
<evidence type="ECO:0007829" key="37">
    <source>
        <dbReference type="PDB" id="5IN3"/>
    </source>
</evidence>
<evidence type="ECO:0007829" key="38">
    <source>
        <dbReference type="PDB" id="6GQD"/>
    </source>
</evidence>
<proteinExistence type="evidence at protein level"/>
<protein>
    <recommendedName>
        <fullName>Galactose-1-phosphate uridylyltransferase</fullName>
        <shortName>Gal-1-P uridylyltransferase</shortName>
        <ecNumber evidence="17 21">2.7.7.12</ecNumber>
    </recommendedName>
    <alternativeName>
        <fullName>UDP-glucose--hexose-1-phosphate uridylyltransferase</fullName>
    </alternativeName>
</protein>
<dbReference type="EC" id="2.7.7.12" evidence="17 21"/>
<dbReference type="EMBL" id="M60091">
    <property type="protein sequence ID" value="AAC83409.1"/>
    <property type="molecule type" value="mRNA"/>
</dbReference>
<dbReference type="EMBL" id="M96264">
    <property type="protein sequence ID" value="AAA74450.1"/>
    <property type="molecule type" value="Genomic_DNA"/>
</dbReference>
<dbReference type="EMBL" id="L46359">
    <property type="protein sequence ID" value="AAB59606.1"/>
    <property type="molecule type" value="Genomic_DNA"/>
</dbReference>
<dbReference type="EMBL" id="L46360">
    <property type="protein sequence ID" value="AAB59604.1"/>
    <property type="molecule type" value="Genomic_DNA"/>
</dbReference>
<dbReference type="EMBL" id="L46361">
    <property type="protein sequence ID" value="AAB59605.1"/>
    <property type="molecule type" value="Genomic_DNA"/>
</dbReference>
<dbReference type="EMBL" id="L46362">
    <property type="protein sequence ID" value="AAB59603.1"/>
    <property type="molecule type" value="Genomic_DNA"/>
</dbReference>
<dbReference type="EMBL" id="L46363">
    <property type="protein sequence ID" value="AAB59607.1"/>
    <property type="molecule type" value="Genomic_DNA"/>
</dbReference>
<dbReference type="EMBL" id="L46364">
    <property type="protein sequence ID" value="AAB59584.1"/>
    <property type="molecule type" value="Genomic_DNA"/>
</dbReference>
<dbReference type="EMBL" id="L46365">
    <property type="protein sequence ID" value="AAB59585.1"/>
    <property type="molecule type" value="Genomic_DNA"/>
</dbReference>
<dbReference type="EMBL" id="L46691">
    <property type="protein sequence ID" value="AAB59586.1"/>
    <property type="molecule type" value="Genomic_DNA"/>
</dbReference>
<dbReference type="EMBL" id="L46692">
    <property type="protein sequence ID" value="AAB59588.1"/>
    <property type="molecule type" value="Genomic_DNA"/>
</dbReference>
<dbReference type="EMBL" id="L46693">
    <property type="protein sequence ID" value="AAB59587.1"/>
    <property type="molecule type" value="Genomic_DNA"/>
</dbReference>
<dbReference type="EMBL" id="L46694">
    <property type="protein sequence ID" value="AAB59589.1"/>
    <property type="molecule type" value="Genomic_DNA"/>
</dbReference>
<dbReference type="EMBL" id="L46698">
    <property type="protein sequence ID" value="AAB59590.1"/>
    <property type="molecule type" value="Genomic_DNA"/>
</dbReference>
<dbReference type="EMBL" id="L46699">
    <property type="protein sequence ID" value="AAB59608.1"/>
    <property type="molecule type" value="Genomic_DNA"/>
</dbReference>
<dbReference type="EMBL" id="L46703">
    <property type="protein sequence ID" value="AAB59591.1"/>
    <property type="molecule type" value="Genomic_DNA"/>
</dbReference>
<dbReference type="EMBL" id="L46704">
    <property type="protein sequence ID" value="AAB59578.1"/>
    <property type="molecule type" value="Genomic_DNA"/>
</dbReference>
<dbReference type="EMBL" id="L46705">
    <property type="protein sequence ID" value="AAB59592.1"/>
    <property type="molecule type" value="Genomic_DNA"/>
</dbReference>
<dbReference type="EMBL" id="L46706">
    <property type="protein sequence ID" value="AAB59593.1"/>
    <property type="molecule type" value="Genomic_DNA"/>
</dbReference>
<dbReference type="EMBL" id="L46707">
    <property type="protein sequence ID" value="AAA81544.1"/>
    <property type="molecule type" value="Genomic_DNA"/>
</dbReference>
<dbReference type="EMBL" id="L46708">
    <property type="protein sequence ID" value="AAA81545.1"/>
    <property type="molecule type" value="Genomic_DNA"/>
</dbReference>
<dbReference type="EMBL" id="L46709">
    <property type="protein sequence ID" value="AAB59594.1"/>
    <property type="molecule type" value="Genomic_DNA"/>
</dbReference>
<dbReference type="EMBL" id="L46710">
    <property type="protein sequence ID" value="AAB59595.1"/>
    <property type="molecule type" value="Genomic_DNA"/>
</dbReference>
<dbReference type="EMBL" id="L46711">
    <property type="protein sequence ID" value="AAB59596.1"/>
    <property type="molecule type" value="Genomic_DNA"/>
</dbReference>
<dbReference type="EMBL" id="L46712">
    <property type="protein sequence ID" value="AAB59597.1"/>
    <property type="molecule type" value="Genomic_DNA"/>
</dbReference>
<dbReference type="EMBL" id="L46713">
    <property type="protein sequence ID" value="AAB59598.1"/>
    <property type="molecule type" value="Genomic_DNA"/>
</dbReference>
<dbReference type="EMBL" id="L46714">
    <property type="protein sequence ID" value="AAB59599.1"/>
    <property type="molecule type" value="Genomic_DNA"/>
</dbReference>
<dbReference type="EMBL" id="L46715">
    <property type="protein sequence ID" value="AAB59601.1"/>
    <property type="molecule type" value="Genomic_DNA"/>
</dbReference>
<dbReference type="EMBL" id="L46716">
    <property type="protein sequence ID" value="AAB59600.1"/>
    <property type="molecule type" value="Genomic_DNA"/>
</dbReference>
<dbReference type="EMBL" id="L46717">
    <property type="protein sequence ID" value="AAA81546.1"/>
    <property type="molecule type" value="Genomic_DNA"/>
</dbReference>
<dbReference type="EMBL" id="BT009852">
    <property type="protein sequence ID" value="AAP88854.1"/>
    <property type="molecule type" value="mRNA"/>
</dbReference>
<dbReference type="EMBL" id="AK303279">
    <property type="protein sequence ID" value="BAG64359.1"/>
    <property type="molecule type" value="mRNA"/>
</dbReference>
<dbReference type="EMBL" id="AL162231">
    <property type="status" value="NOT_ANNOTATED_CDS"/>
    <property type="molecule type" value="Genomic_DNA"/>
</dbReference>
<dbReference type="EMBL" id="AL450283">
    <property type="status" value="NOT_ANNOTATED_CDS"/>
    <property type="molecule type" value="Genomic_DNA"/>
</dbReference>
<dbReference type="EMBL" id="CH471071">
    <property type="protein sequence ID" value="EAW58428.1"/>
    <property type="molecule type" value="Genomic_DNA"/>
</dbReference>
<dbReference type="EMBL" id="BC015045">
    <property type="protein sequence ID" value="AAH15045.1"/>
    <property type="molecule type" value="mRNA"/>
</dbReference>
<dbReference type="CCDS" id="CCDS59122.1">
    <molecule id="P07902-2"/>
</dbReference>
<dbReference type="CCDS" id="CCDS6565.1">
    <molecule id="P07902-1"/>
</dbReference>
<dbReference type="PIR" id="A44473">
    <property type="entry name" value="A44473"/>
</dbReference>
<dbReference type="PIR" id="I57459">
    <property type="entry name" value="I57459"/>
</dbReference>
<dbReference type="PIR" id="JL0053">
    <property type="entry name" value="JL0053"/>
</dbReference>
<dbReference type="RefSeq" id="NP_000146.2">
    <molecule id="P07902-1"/>
    <property type="nucleotide sequence ID" value="NM_000155.3"/>
</dbReference>
<dbReference type="RefSeq" id="NP_001245261.1">
    <molecule id="P07902-2"/>
    <property type="nucleotide sequence ID" value="NM_001258332.2"/>
</dbReference>
<dbReference type="PDB" id="5IN3">
    <property type="method" value="X-ray"/>
    <property type="resolution" value="1.73 A"/>
    <property type="chains" value="A/B=1-379"/>
</dbReference>
<dbReference type="PDB" id="6GQD">
    <property type="method" value="X-ray"/>
    <property type="resolution" value="1.52 A"/>
    <property type="chains" value="A=1-379"/>
</dbReference>
<dbReference type="PDBsum" id="5IN3"/>
<dbReference type="PDBsum" id="6GQD"/>
<dbReference type="SMR" id="P07902"/>
<dbReference type="BioGRID" id="108864">
    <property type="interactions" value="21"/>
</dbReference>
<dbReference type="FunCoup" id="P07902">
    <property type="interactions" value="1356"/>
</dbReference>
<dbReference type="IntAct" id="P07902">
    <property type="interactions" value="18"/>
</dbReference>
<dbReference type="STRING" id="9606.ENSP00000368119"/>
<dbReference type="GlyGen" id="P07902">
    <property type="glycosylation" value="1 site"/>
</dbReference>
<dbReference type="iPTMnet" id="P07902"/>
<dbReference type="PhosphoSitePlus" id="P07902"/>
<dbReference type="BioMuta" id="GALT"/>
<dbReference type="DMDM" id="3183522"/>
<dbReference type="jPOST" id="P07902"/>
<dbReference type="MassIVE" id="P07902"/>
<dbReference type="PaxDb" id="9606-ENSP00000368119"/>
<dbReference type="PeptideAtlas" id="P07902"/>
<dbReference type="ProteomicsDB" id="18114"/>
<dbReference type="ProteomicsDB" id="52033">
    <molecule id="P07902-1"/>
</dbReference>
<dbReference type="Pumba" id="P07902"/>
<dbReference type="ABCD" id="P07902">
    <property type="antibodies" value="1 sequenced antibody"/>
</dbReference>
<dbReference type="Antibodypedia" id="1384">
    <property type="antibodies" value="336 antibodies from 31 providers"/>
</dbReference>
<dbReference type="DNASU" id="2592"/>
<dbReference type="Ensembl" id="ENST00000378842.8">
    <molecule id="P07902-1"/>
    <property type="protein sequence ID" value="ENSP00000368119.4"/>
    <property type="gene ID" value="ENSG00000213930.12"/>
</dbReference>
<dbReference type="Ensembl" id="ENST00000450095.6">
    <molecule id="P07902-2"/>
    <property type="protein sequence ID" value="ENSP00000401956.2"/>
    <property type="gene ID" value="ENSG00000213930.12"/>
</dbReference>
<dbReference type="GeneID" id="2592"/>
<dbReference type="KEGG" id="hsa:2592"/>
<dbReference type="MANE-Select" id="ENST00000378842.8">
    <property type="protein sequence ID" value="ENSP00000368119.4"/>
    <property type="RefSeq nucleotide sequence ID" value="NM_000155.4"/>
    <property type="RefSeq protein sequence ID" value="NP_000146.2"/>
</dbReference>
<dbReference type="UCSC" id="uc003zve.5">
    <molecule id="P07902-1"/>
    <property type="organism name" value="human"/>
</dbReference>
<dbReference type="AGR" id="HGNC:4135"/>
<dbReference type="CTD" id="2592"/>
<dbReference type="DisGeNET" id="2592"/>
<dbReference type="GeneCards" id="GALT"/>
<dbReference type="GeneReviews" id="GALT"/>
<dbReference type="HGNC" id="HGNC:4135">
    <property type="gene designation" value="GALT"/>
</dbReference>
<dbReference type="HPA" id="ENSG00000213930">
    <property type="expression patterns" value="Tissue enhanced (liver)"/>
</dbReference>
<dbReference type="MalaCards" id="GALT"/>
<dbReference type="MIM" id="230400">
    <property type="type" value="phenotype"/>
</dbReference>
<dbReference type="MIM" id="606999">
    <property type="type" value="gene"/>
</dbReference>
<dbReference type="neXtProt" id="NX_P07902"/>
<dbReference type="OpenTargets" id="ENSG00000213930"/>
<dbReference type="Orphanet" id="79239">
    <property type="disease" value="Classic galactosemia"/>
</dbReference>
<dbReference type="PharmGKB" id="PA28548"/>
<dbReference type="VEuPathDB" id="HostDB:ENSG00000213930"/>
<dbReference type="eggNOG" id="KOG2958">
    <property type="taxonomic scope" value="Eukaryota"/>
</dbReference>
<dbReference type="GeneTree" id="ENSGT00390000016188"/>
<dbReference type="HOGENOM" id="CLU_029960_2_0_1"/>
<dbReference type="InParanoid" id="P07902"/>
<dbReference type="OMA" id="CFENRGA"/>
<dbReference type="OrthoDB" id="418412at2759"/>
<dbReference type="PAN-GO" id="P07902">
    <property type="GO annotations" value="3 GO annotations based on evolutionary models"/>
</dbReference>
<dbReference type="PhylomeDB" id="P07902"/>
<dbReference type="TreeFam" id="TF300018"/>
<dbReference type="BioCyc" id="MetaCyc:HS06274-MONOMER"/>
<dbReference type="BRENDA" id="2.7.7.12">
    <property type="organism ID" value="2681"/>
</dbReference>
<dbReference type="PathwayCommons" id="P07902"/>
<dbReference type="Reactome" id="R-HSA-5609978">
    <property type="pathway name" value="Defective GALT can cause GALCT"/>
</dbReference>
<dbReference type="Reactome" id="R-HSA-70370">
    <property type="pathway name" value="Galactose catabolism"/>
</dbReference>
<dbReference type="SABIO-RK" id="P07902"/>
<dbReference type="SignaLink" id="P07902"/>
<dbReference type="SIGNOR" id="P07902"/>
<dbReference type="UniPathway" id="UPA00214"/>
<dbReference type="BioGRID-ORCS" id="2592">
    <property type="hits" value="12 hits in 1154 CRISPR screens"/>
</dbReference>
<dbReference type="ChiTaRS" id="GALT">
    <property type="organism name" value="human"/>
</dbReference>
<dbReference type="GeneWiki" id="Galactose%E2%80%941-phosphate_uridylyltransferase"/>
<dbReference type="GenomeRNAi" id="2592"/>
<dbReference type="Pharos" id="P07902">
    <property type="development level" value="Tbio"/>
</dbReference>
<dbReference type="PRO" id="PR:P07902"/>
<dbReference type="Proteomes" id="UP000005640">
    <property type="component" value="Chromosome 9"/>
</dbReference>
<dbReference type="RNAct" id="P07902">
    <property type="molecule type" value="protein"/>
</dbReference>
<dbReference type="Bgee" id="ENSG00000213930">
    <property type="expression patterns" value="Expressed in right lobe of liver and 158 other cell types or tissues"/>
</dbReference>
<dbReference type="ExpressionAtlas" id="P07902">
    <property type="expression patterns" value="baseline and differential"/>
</dbReference>
<dbReference type="GO" id="GO:0005737">
    <property type="term" value="C:cytoplasm"/>
    <property type="evidence" value="ECO:0000318"/>
    <property type="project" value="GO_Central"/>
</dbReference>
<dbReference type="GO" id="GO:0005829">
    <property type="term" value="C:cytosol"/>
    <property type="evidence" value="ECO:0000304"/>
    <property type="project" value="Reactome"/>
</dbReference>
<dbReference type="GO" id="GO:0005794">
    <property type="term" value="C:Golgi apparatus"/>
    <property type="evidence" value="ECO:0000314"/>
    <property type="project" value="UniProtKB"/>
</dbReference>
<dbReference type="GO" id="GO:0008108">
    <property type="term" value="F:UDP-glucose:hexose-1-phosphate uridylyltransferase activity"/>
    <property type="evidence" value="ECO:0000314"/>
    <property type="project" value="UniProtKB"/>
</dbReference>
<dbReference type="GO" id="GO:0008270">
    <property type="term" value="F:zinc ion binding"/>
    <property type="evidence" value="ECO:0000314"/>
    <property type="project" value="UniProtKB"/>
</dbReference>
<dbReference type="GO" id="GO:0033499">
    <property type="term" value="P:galactose catabolic process via UDP-galactose, Leloir pathway"/>
    <property type="evidence" value="ECO:0000318"/>
    <property type="project" value="GO_Central"/>
</dbReference>
<dbReference type="GO" id="GO:0006012">
    <property type="term" value="P:galactose metabolic process"/>
    <property type="evidence" value="ECO:0000314"/>
    <property type="project" value="UniProtKB"/>
</dbReference>
<dbReference type="GO" id="GO:0006011">
    <property type="term" value="P:UDP-alpha-D-glucose metabolic process"/>
    <property type="evidence" value="ECO:0000314"/>
    <property type="project" value="UniProtKB"/>
</dbReference>
<dbReference type="CDD" id="cd00608">
    <property type="entry name" value="GalT"/>
    <property type="match status" value="1"/>
</dbReference>
<dbReference type="FunFam" id="3.30.428.10:FF:000001">
    <property type="entry name" value="Galactose-1-phosphate uridylyltransferase"/>
    <property type="match status" value="1"/>
</dbReference>
<dbReference type="FunFam" id="3.30.428.10:FF:000002">
    <property type="entry name" value="Galactose-1-phosphate uridylyltransferase"/>
    <property type="match status" value="1"/>
</dbReference>
<dbReference type="Gene3D" id="3.30.428.10">
    <property type="entry name" value="HIT-like"/>
    <property type="match status" value="2"/>
</dbReference>
<dbReference type="InterPro" id="IPR001937">
    <property type="entry name" value="GalP_UDPtransf1"/>
</dbReference>
<dbReference type="InterPro" id="IPR019779">
    <property type="entry name" value="GalP_UDPtransf1_His-AS"/>
</dbReference>
<dbReference type="InterPro" id="IPR005850">
    <property type="entry name" value="GalP_Utransf_C"/>
</dbReference>
<dbReference type="InterPro" id="IPR005849">
    <property type="entry name" value="GalP_Utransf_N"/>
</dbReference>
<dbReference type="InterPro" id="IPR036265">
    <property type="entry name" value="HIT-like_sf"/>
</dbReference>
<dbReference type="NCBIfam" id="TIGR00209">
    <property type="entry name" value="galT_1"/>
    <property type="match status" value="1"/>
</dbReference>
<dbReference type="NCBIfam" id="NF008724">
    <property type="entry name" value="PRK11720.1"/>
    <property type="match status" value="1"/>
</dbReference>
<dbReference type="PANTHER" id="PTHR11943">
    <property type="entry name" value="GALACTOSE-1-PHOSPHATE URIDYLYLTRANSFERASE"/>
    <property type="match status" value="1"/>
</dbReference>
<dbReference type="PANTHER" id="PTHR11943:SF1">
    <property type="entry name" value="GALACTOSE-1-PHOSPHATE URIDYLYLTRANSFERASE"/>
    <property type="match status" value="1"/>
</dbReference>
<dbReference type="Pfam" id="PF02744">
    <property type="entry name" value="GalP_UDP_tr_C"/>
    <property type="match status" value="1"/>
</dbReference>
<dbReference type="Pfam" id="PF01087">
    <property type="entry name" value="GalP_UDP_transf"/>
    <property type="match status" value="1"/>
</dbReference>
<dbReference type="PIRSF" id="PIRSF000808">
    <property type="entry name" value="GalT"/>
    <property type="match status" value="1"/>
</dbReference>
<dbReference type="SUPFAM" id="SSF54197">
    <property type="entry name" value="HIT-like"/>
    <property type="match status" value="2"/>
</dbReference>
<dbReference type="PROSITE" id="PS00117">
    <property type="entry name" value="GAL_P_UDP_TRANSF_I"/>
    <property type="match status" value="1"/>
</dbReference>
<keyword id="KW-0002">3D-structure</keyword>
<keyword id="KW-0025">Alternative splicing</keyword>
<keyword id="KW-0119">Carbohydrate metabolism</keyword>
<keyword id="KW-0898">Cataract</keyword>
<keyword id="KW-0225">Disease variant</keyword>
<keyword id="KW-0299">Galactose metabolism</keyword>
<keyword id="KW-0479">Metal-binding</keyword>
<keyword id="KW-0548">Nucleotidyltransferase</keyword>
<keyword id="KW-1267">Proteomics identification</keyword>
<keyword id="KW-1185">Reference proteome</keyword>
<keyword id="KW-0808">Transferase</keyword>
<keyword id="KW-0862">Zinc</keyword>
<feature type="chain" id="PRO_0000169882" description="Galactose-1-phosphate uridylyltransferase">
    <location>
        <begin position="1"/>
        <end position="379"/>
    </location>
</feature>
<feature type="region of interest" description="Disordered" evidence="2">
    <location>
        <begin position="1"/>
        <end position="21"/>
    </location>
</feature>
<feature type="compositionally biased region" description="Low complexity" evidence="2">
    <location>
        <begin position="9"/>
        <end position="21"/>
    </location>
</feature>
<feature type="active site" description="Tele-UMP-histidine intermediate" evidence="1 21">
    <location>
        <position position="186"/>
    </location>
</feature>
<feature type="binding site" evidence="1">
    <location>
        <position position="75"/>
    </location>
    <ligand>
        <name>Zn(2+)</name>
        <dbReference type="ChEBI" id="CHEBI:29105"/>
        <label>1</label>
    </ligand>
</feature>
<feature type="binding site" description="in other chain" evidence="35">
    <location>
        <position position="81"/>
    </location>
    <ligand>
        <name>UDP-alpha-D-glucose</name>
        <dbReference type="ChEBI" id="CHEBI:58885"/>
        <note>ligand shared between dimeric partners</note>
    </ligand>
</feature>
<feature type="binding site" description="in other chain" evidence="35">
    <location>
        <begin position="97"/>
        <end position="98"/>
    </location>
    <ligand>
        <name>UDP-alpha-D-glucose</name>
        <dbReference type="ChEBI" id="CHEBI:58885"/>
        <note>ligand shared between dimeric partners</note>
    </ligand>
</feature>
<feature type="binding site" evidence="35">
    <location>
        <position position="173"/>
    </location>
    <ligand>
        <name>UDP-alpha-D-glucose</name>
        <dbReference type="ChEBI" id="CHEBI:58885"/>
        <note>ligand shared between dimeric partners</note>
    </ligand>
</feature>
<feature type="binding site" evidence="1">
    <location>
        <position position="184"/>
    </location>
    <ligand>
        <name>Zn(2+)</name>
        <dbReference type="ChEBI" id="CHEBI:29105"/>
        <label>1</label>
    </ligand>
</feature>
<feature type="binding site" description="in other chain" evidence="35">
    <location>
        <position position="188"/>
    </location>
    <ligand>
        <name>UDP-alpha-D-glucose</name>
        <dbReference type="ChEBI" id="CHEBI:58885"/>
        <note>ligand shared between dimeric partners</note>
    </ligand>
</feature>
<feature type="binding site" evidence="21">
    <location>
        <position position="202"/>
    </location>
    <ligand>
        <name>Zn(2+)</name>
        <dbReference type="ChEBI" id="CHEBI:29105"/>
        <label>2</label>
    </ligand>
</feature>
<feature type="binding site" evidence="21">
    <location>
        <position position="301"/>
    </location>
    <ligand>
        <name>Zn(2+)</name>
        <dbReference type="ChEBI" id="CHEBI:29105"/>
        <label>2</label>
    </ligand>
</feature>
<feature type="binding site" evidence="21">
    <location>
        <position position="319"/>
    </location>
    <ligand>
        <name>Zn(2+)</name>
        <dbReference type="ChEBI" id="CHEBI:29105"/>
        <label>2</label>
    </ligand>
</feature>
<feature type="binding site" evidence="21">
    <location>
        <position position="321"/>
    </location>
    <ligand>
        <name>Zn(2+)</name>
        <dbReference type="ChEBI" id="CHEBI:29105"/>
        <label>2</label>
    </ligand>
</feature>
<feature type="binding site" description="in other chain" evidence="35">
    <location>
        <begin position="334"/>
        <end position="337"/>
    </location>
    <ligand>
        <name>UDP-alpha-D-glucose</name>
        <dbReference type="ChEBI" id="CHEBI:58885"/>
        <note>ligand shared between dimeric partners</note>
    </ligand>
</feature>
<feature type="binding site" description="in other chain" evidence="35">
    <location>
        <begin position="339"/>
        <end position="340"/>
    </location>
    <ligand>
        <name>UDP-alpha-D-glucose</name>
        <dbReference type="ChEBI" id="CHEBI:58885"/>
        <note>ligand shared between dimeric partners</note>
    </ligand>
</feature>
<feature type="splice variant" id="VSP_045604" description="In isoform 2." evidence="33">
    <original>MSRSGTDPQQRQQASEA</original>
    <variation>MTLSTLCVLGPSEPTES</variation>
    <location>
        <begin position="1"/>
        <end position="17"/>
    </location>
</feature>
<feature type="splice variant" id="VSP_045605" description="In isoform 2." evidence="33">
    <location>
        <begin position="18"/>
        <end position="126"/>
    </location>
</feature>
<feature type="sequence variant" id="VAR_068531" description="In GALAC1; dbSNP:rs111033637." evidence="6">
    <original>Q</original>
    <variation>H</variation>
    <location>
        <position position="9"/>
    </location>
</feature>
<feature type="sequence variant" id="VAR_068532" description="In GALAC1; dbSNP:rs111033635." evidence="5">
    <original>T</original>
    <variation>A</variation>
    <location>
        <position position="23"/>
    </location>
</feature>
<feature type="sequence variant" id="VAR_068533" description="In GALAC1; dbSNP:rs111033636." evidence="12">
    <original>D</original>
    <variation>H</variation>
    <location>
        <position position="28"/>
    </location>
</feature>
<feature type="sequence variant" id="VAR_002548" description="In GALAC1; dbSNP:rs111033636." evidence="31">
    <original>D</original>
    <variation>Y</variation>
    <location>
        <position position="28"/>
    </location>
</feature>
<feature type="sequence variant" id="VAR_002549" description="In GALAC1; mild; dbSNP:rs111033644." evidence="31">
    <original>I</original>
    <variation>N</variation>
    <location>
        <position position="32"/>
    </location>
</feature>
<feature type="sequence variant" id="VAR_068534" description="In GALAC1; dbSNP:rs111033829." evidence="12">
    <original>R</original>
    <variation>H</variation>
    <location>
        <position position="33"/>
    </location>
</feature>
<feature type="sequence variant" id="VAR_072793" description="In GALAC1." evidence="19">
    <original>R</original>
    <variation>P</variation>
    <location>
        <position position="33"/>
    </location>
</feature>
<feature type="sequence variant" id="VAR_068535" description="In GALAC1; affects protein stability; dbSNP:rs111033836." evidence="17 19">
    <original>Y</original>
    <variation>N</variation>
    <location>
        <position position="34"/>
    </location>
</feature>
<feature type="sequence variant" id="VAR_002550" description="In GALAC1; dbSNP:rs111033646." evidence="31">
    <original>Q</original>
    <variation>P</variation>
    <location>
        <position position="38"/>
    </location>
</feature>
<feature type="sequence variant" id="VAR_002551" description="In GALAC1; dbSNP:rs111033647.">
    <original>V</original>
    <variation>L</variation>
    <location>
        <position position="44"/>
    </location>
</feature>
<feature type="sequence variant" id="VAR_002552" description="In GALAC1; reduced enzyme activity; dbSNP:rs111033647." evidence="16">
    <original>V</original>
    <variation>M</variation>
    <location>
        <position position="44"/>
    </location>
</feature>
<feature type="sequence variant" id="VAR_008042" description="In GALAC1; dbSNP:rs111033652." evidence="4">
    <original>S</original>
    <variation>L</variation>
    <location>
        <position position="45"/>
    </location>
</feature>
<feature type="sequence variant" id="VAR_002553" description="In GALAC1; dbSNP:rs111033648." evidence="4">
    <original>R</original>
    <variation>L</variation>
    <location>
        <position position="51"/>
    </location>
</feature>
<feature type="sequence variant" id="VAR_023328" description="In GALAC1; dbSNP:rs111033648." evidence="10">
    <original>R</original>
    <variation>Q</variation>
    <location>
        <position position="51"/>
    </location>
</feature>
<feature type="sequence variant" id="VAR_002554" description="In GALAC1; dbSNP:rs111033654." evidence="28">
    <original>G</original>
    <variation>C</variation>
    <location>
        <position position="55"/>
    </location>
</feature>
<feature type="sequence variant" id="VAR_002555" description="In dbSNP:rs1800461." evidence="16">
    <original>L</original>
    <variation>M</variation>
    <location>
        <position position="62"/>
    </location>
</feature>
<feature type="sequence variant" id="VAR_002556" description="In GALAC1; dbSNP:rs111033658." evidence="27">
    <original>R</original>
    <variation>C</variation>
    <location>
        <position position="67"/>
    </location>
</feature>
<feature type="sequence variant" id="VAR_002557" description="In GALAC1; reduced enzyme activity; dbSNP:rs111033663." evidence="11">
    <original>L</original>
    <variation>P</variation>
    <location>
        <position position="74"/>
    </location>
</feature>
<feature type="sequence variant" id="VAR_002558" description="In GALAC1; dbSNP:rs111033665." evidence="8">
    <original>A</original>
    <variation>T</variation>
    <location>
        <position position="81"/>
    </location>
</feature>
<feature type="sequence variant" id="VAR_072794" description="In GALAC1." evidence="19">
    <original>G</original>
    <variation>V</variation>
    <location>
        <position position="83"/>
    </location>
</feature>
<feature type="sequence variant" id="VAR_068824" description="In GALAC1; dbSNP:rs111033666." evidence="18">
    <original>Y</original>
    <variation>H</variation>
    <location>
        <position position="89"/>
    </location>
</feature>
<feature type="sequence variant" id="VAR_002559" description="In GALAC1; dbSNP:rs111033669.">
    <original>N</original>
    <variation>S</variation>
    <location>
        <position position="97"/>
    </location>
</feature>
<feature type="sequence variant" id="VAR_002560" description="In GALAC1; dbSNP:rs111033670." evidence="4">
    <original>D</original>
    <variation>N</variation>
    <location>
        <position position="98"/>
    </location>
</feature>
<feature type="sequence variant" id="VAR_068825" description="In GALAC1; dbSNP:rs367543252." evidence="18">
    <original>Q</original>
    <variation>R</variation>
    <location>
        <position position="103"/>
    </location>
</feature>
<feature type="sequence variant" id="VAR_068536" description="In GALAC1; dbSNP:rs367543254." evidence="14">
    <original>S</original>
    <variation>R</variation>
    <location>
        <position position="112"/>
    </location>
</feature>
<feature type="sequence variant" id="VAR_002561" description="In GALAC1; dbSNP:rs111033677." evidence="4">
    <original>D</original>
    <variation>N</variation>
    <location>
        <position position="113"/>
    </location>
</feature>
<feature type="sequence variant" id="VAR_002562" description="In GALAC1; dbSNP:rs111033678." evidence="4">
    <original>H</original>
    <variation>L</variation>
    <location>
        <position position="114"/>
    </location>
</feature>
<feature type="sequence variant" id="VAR_002563" description="In GALAC1; dbSNP:rs111033679." evidence="4">
    <original>F</original>
    <variation>S</variation>
    <location>
        <position position="117"/>
    </location>
</feature>
<feature type="sequence variant" id="VAR_002564" description="In GALAC1; dbSNP:rs111033673." evidence="4">
    <original>Q</original>
    <variation>H</variation>
    <location>
        <position position="118"/>
    </location>
</feature>
<feature type="sequence variant" id="VAR_002565" description="In GALAC1; dbSNP:rs111033674." evidence="31">
    <original>R</original>
    <variation>G</variation>
    <location>
        <position position="123"/>
    </location>
</feature>
<feature type="sequence variant" id="VAR_002566" description="In GALAC1; dbSNP:rs111033675." evidence="4">
    <original>R</original>
    <variation>Q</variation>
    <location>
        <position position="123"/>
    </location>
</feature>
<feature type="sequence variant" id="VAR_002567" description="In GALAC1; dbSNP:rs111033680." evidence="4">
    <original>V</original>
    <variation>A</variation>
    <location>
        <position position="125"/>
    </location>
</feature>
<feature type="sequence variant" id="VAR_002568" description="In GALAC1; dbSNP:rs111033682." evidence="4">
    <original>K</original>
    <variation>E</variation>
    <location>
        <position position="127"/>
    </location>
</feature>
<feature type="sequence variant" id="VAR_008043" description="In GALAC1; dbSNP:rs111033683." evidence="6">
    <original>M</original>
    <variation>T</variation>
    <location>
        <position position="129"/>
    </location>
</feature>
<feature type="sequence variant" id="VAR_002569" description="In GALAC1; dbSNP:rs367543255." evidence="4">
    <original>C</original>
    <variation>Y</variation>
    <location>
        <position position="130"/>
    </location>
</feature>
<feature type="sequence variant" id="VAR_068537" description="In GALAC1; affects protein stability; dbSNP:rs367543256." evidence="17">
    <original>H</original>
    <variation>Q</variation>
    <location>
        <position position="132"/>
    </location>
</feature>
<feature type="sequence variant" id="VAR_002570" description="In GALAC1; dbSNP:rs111033688." evidence="4">
    <original>H</original>
    <variation>Y</variation>
    <location>
        <position position="132"/>
    </location>
</feature>
<feature type="sequence variant" id="VAR_002571" description="In GALAC1; about 5% of normal galactose uridylyltransferase activity; dbSNP:rs111033690." evidence="5 11 17 20 24">
    <original>S</original>
    <variation>L</variation>
    <location>
        <position position="135"/>
    </location>
</feature>
<feature type="sequence variant" id="VAR_023329" description="In GALAC1; dbSNP:rs111033690." evidence="10">
    <original>S</original>
    <variation>W</variation>
    <location>
        <position position="135"/>
    </location>
</feature>
<feature type="sequence variant" id="VAR_002572" description="In GALAC1; mild; dbSNP:rs111033686." evidence="5">
    <original>T</original>
    <variation>M</variation>
    <location>
        <position position="138"/>
    </location>
</feature>
<feature type="sequence variant" id="VAR_002573" description="In GALAC1; dbSNP:rs111033687." evidence="4">
    <original>L</original>
    <variation>P</variation>
    <location>
        <position position="139"/>
    </location>
</feature>
<feature type="sequence variant" id="VAR_002574" description="In GALAC1; 4% of normal activity; dbSNP:rs111033695." evidence="3 16">
    <original>M</original>
    <variation>K</variation>
    <location>
        <position position="142"/>
    </location>
</feature>
<feature type="sequence variant" id="VAR_072795" description="In GALAC1; dbSNP:rs111033695." evidence="19">
    <original>M</original>
    <variation>T</variation>
    <location>
        <position position="142"/>
    </location>
</feature>
<feature type="sequence variant" id="VAR_002575" description="In GALAC1; dbSNP:rs111033692." evidence="4">
    <original>M</original>
    <variation>V</variation>
    <location>
        <position position="142"/>
    </location>
</feature>
<feature type="sequence variant" id="VAR_002576" description="In GALAC1; dbSNP:rs111033697." evidence="31">
    <original>S</original>
    <variation>L</variation>
    <location>
        <position position="143"/>
    </location>
</feature>
<feature type="sequence variant" id="VAR_002577" description="In GALAC1; dbSNP:rs111033693." evidence="4">
    <original>R</original>
    <variation>G</variation>
    <location>
        <position position="148"/>
    </location>
</feature>
<feature type="sequence variant" id="VAR_002578" description="In GALAC1; dbSNP:rs111033694." evidence="20">
    <original>R</original>
    <variation>Q</variation>
    <location>
        <position position="148"/>
    </location>
</feature>
<feature type="sequence variant" id="VAR_002579" description="In GALAC1; unstable protein; dbSNP:rs111033693." evidence="7">
    <original>R</original>
    <variation>W</variation>
    <location>
        <position position="148"/>
    </location>
</feature>
<feature type="sequence variant" id="VAR_002580" description="In GALAC1; dbSNP:rs111033699." evidence="30">
    <original>V</original>
    <variation>L</variation>
    <location>
        <position position="150"/>
    </location>
</feature>
<feature type="sequence variant" id="VAR_002581" description="In GALAC1; approximately 3% of normal activity; dbSNP:rs111033701." evidence="24">
    <original>V</original>
    <variation>A</variation>
    <location>
        <position position="151"/>
    </location>
</feature>
<feature type="sequence variant" id="VAR_002582" description="In GALAC1; dbSNP:rs111033702." evidence="4">
    <original>W</original>
    <variation>G</variation>
    <location>
        <position position="154"/>
    </location>
</feature>
<feature type="sequence variant" id="VAR_068826" description="In GALAC1; dbSNP:rs367543257." evidence="18">
    <original>P</original>
    <variation>A</variation>
    <location>
        <position position="166"/>
    </location>
</feature>
<feature type="sequence variant" id="VAR_008044" description="In GALAC1; dbSNP:rs111033708." evidence="4">
    <original>W</original>
    <variation>R</variation>
    <location>
        <position position="167"/>
    </location>
</feature>
<feature type="sequence variant" id="VAR_068538" description="In GALAC1; loss of activity; dbSNP:rs367543258." evidence="17">
    <original>V</original>
    <variation>L</variation>
    <location>
        <position position="168"/>
    </location>
</feature>
<feature type="sequence variant" id="VAR_068539" description="In GALAC1; loss of activity; dbSNP:rs111033839." evidence="17">
    <original>I</original>
    <variation>T</variation>
    <location>
        <position position="170"/>
    </location>
</feature>
<feature type="sequence variant" id="VAR_002583" description="In GALAC1; reduced enzyme activity; dbSNP:rs111033715." evidence="11 18">
    <original>F</original>
    <variation>S</variation>
    <location>
        <position position="171"/>
    </location>
</feature>
<feature type="sequence variant" id="VAR_072796" description="In GALAC1; strongly reduces galactose uridylyltransferase activity; dbSNP:rs111033718." evidence="20">
    <original>G</original>
    <variation>D</variation>
    <location>
        <position position="175"/>
    </location>
</feature>
<feature type="sequence variant" id="VAR_002584" description="In GALAC1; dbSNP:rs111033720." evidence="4">
    <original>G</original>
    <variation>D</variation>
    <location>
        <position position="179"/>
    </location>
</feature>
<feature type="sequence variant" id="VAR_068540" description="In GALAC1; dbSNP:rs111033828." evidence="12">
    <original>S</original>
    <variation>A</variation>
    <location>
        <position position="181"/>
    </location>
</feature>
<feature type="sequence variant" id="VAR_068827" description="In GALAC1; dbSNP:rs367543259." evidence="18">
    <original>S</original>
    <variation>F</variation>
    <location>
        <position position="181"/>
    </location>
</feature>
<feature type="sequence variant" id="VAR_002585" description="In GALAC1; dbSNP:rs111033721." evidence="29 30">
    <original>P</original>
    <variation>T</variation>
    <location>
        <position position="183"/>
    </location>
</feature>
<feature type="sequence variant" id="VAR_002586" description="In GALAC1; dbSNP:rs111033717." evidence="5">
    <original>H</original>
    <variation>Q</variation>
    <location>
        <position position="184"/>
    </location>
</feature>
<feature type="sequence variant" id="VAR_068541" description="In GALAC1; loss of activity; dbSNP:rs111033722." evidence="13 17">
    <original>P</original>
    <variation>H</variation>
    <location>
        <position position="185"/>
    </location>
</feature>
<feature type="sequence variant" id="VAR_068828" description="In GALAC1; dbSNP:rs111033722." evidence="18">
    <original>P</original>
    <variation>L</variation>
    <location>
        <position position="185"/>
    </location>
</feature>
<feature type="sequence variant" id="VAR_068542" description="In GALAC1; dbSNP:rs111033826." evidence="12 20">
    <original>P</original>
    <variation>S</variation>
    <location>
        <position position="185"/>
    </location>
</feature>
<feature type="sequence variant" id="VAR_002587" description="In GALAC1; most common mutation; 10% of normal galactose uridylyltransferase activity; impairs protein folding; dbSNP:rs75391579." evidence="5 8 14 15 17 18 19 20 21 24 30">
    <original>Q</original>
    <variation>R</variation>
    <location>
        <position position="188"/>
    </location>
</feature>
<feature type="sequence variant" id="VAR_068543" description="In GALAC1; dbSNP:rs111033830." evidence="12">
    <original>S</original>
    <variation>G</variation>
    <location>
        <position position="192"/>
    </location>
</feature>
<feature type="sequence variant" id="VAR_002588" description="In GALAC1; dbSNP:rs111033734." evidence="4">
    <original>S</original>
    <variation>N</variation>
    <location>
        <position position="192"/>
    </location>
</feature>
<feature type="sequence variant" id="VAR_002589" description="In GALAC1; dbSNP:rs111033726." evidence="4">
    <original>F</original>
    <variation>L</variation>
    <location>
        <position position="194"/>
    </location>
</feature>
<feature type="sequence variant" id="VAR_002590" description="In GALAC1; no enzymatic activity; dbSNP:rs111033728." evidence="5 7">
    <original>L</original>
    <variation>P</variation>
    <location>
        <position position="195"/>
    </location>
</feature>
<feature type="sequence variant" id="VAR_002591" description="In GALAC1; dbSNP:rs111033729." evidence="4">
    <original>I</original>
    <variation>M</variation>
    <location>
        <position position="198"/>
    </location>
</feature>
<feature type="sequence variant" id="VAR_002592" description="In GALAC1; dbSNP:rs1483461355." evidence="4">
    <original>I</original>
    <variation>T</variation>
    <location>
        <position position="198"/>
    </location>
</feature>
<feature type="sequence variant" id="VAR_002593" description="In GALAC1; dbSNP:rs111033730." evidence="4">
    <original>A</original>
    <variation>T</variation>
    <location>
        <position position="199"/>
    </location>
</feature>
<feature type="sequence variant" id="VAR_068544" description="In GALAC1; 2-fold decrease in activity; dbSNP:rs111033739." evidence="13 17">
    <original>R</original>
    <variation>C</variation>
    <location>
        <position position="201"/>
    </location>
</feature>
<feature type="sequence variant" id="VAR_002594" description="In GALAC1; dbSNP:rs111033735." evidence="4">
    <original>R</original>
    <variation>H</variation>
    <location>
        <position position="201"/>
    </location>
</feature>
<feature type="sequence variant" id="VAR_002595" description="In GALAC1; dbSNP:rs111033736." evidence="4">
    <original>E</original>
    <variation>K</variation>
    <location>
        <position position="203"/>
    </location>
</feature>
<feature type="sequence variant" id="VAR_008045" description="In GALAC1; dbSNP:rs111033740." evidence="4">
    <original>R</original>
    <variation>P</variation>
    <location>
        <position position="204"/>
    </location>
</feature>
<feature type="sequence variant" id="VAR_002596" description="In GALAC1; dbSNP:rs111033744." evidence="4">
    <original>Y</original>
    <variation>C</variation>
    <location>
        <position position="209"/>
    </location>
</feature>
<feature type="sequence variant" id="VAR_002597" description="In GALAC1; dbSNP:rs111033744." evidence="4">
    <original>Y</original>
    <variation>S</variation>
    <location>
        <position position="209"/>
    </location>
</feature>
<feature type="sequence variant" id="VAR_002598" description="In GALAC1.">
    <original>Q</original>
    <variation>H</variation>
    <location>
        <position position="212"/>
    </location>
</feature>
<feature type="sequence variant" id="VAR_002599" description="In GALAC1; dbSNP:rs111033741." evidence="4">
    <original>L</original>
    <variation>P</variation>
    <location>
        <position position="217"/>
    </location>
</feature>
<feature type="sequence variant" id="VAR_068545" description="In GALAC1; 3-fold decrease in activity; dbSNP:rs111033747." evidence="13 17">
    <original>E</original>
    <variation>K</variation>
    <location>
        <position position="220"/>
    </location>
</feature>
<feature type="sequence variant" id="VAR_068546" description="In GALAC1; 3-fold decrease in activity; dbSNP:rs111033750." evidence="13 17">
    <original>R</original>
    <variation>S</variation>
    <location>
        <position position="223"/>
    </location>
</feature>
<feature type="sequence variant" id="VAR_002600" description="In GALAC1; dbSNP:rs111033752." evidence="4">
    <original>L</original>
    <variation>P</variation>
    <location>
        <position position="226"/>
    </location>
</feature>
<feature type="sequence variant" id="VAR_068547" description="In GALAC1; results in no detectable protein in the soluble fraction; dbSNP:rs111033846." evidence="17">
    <original>L</original>
    <variation>P</variation>
    <location>
        <position position="227"/>
    </location>
</feature>
<feature type="sequence variant" id="VAR_023330" description="In GALAC1; dbSNP:rs111033753." evidence="10">
    <original>K</original>
    <variation>N</variation>
    <location>
        <position position="229"/>
    </location>
</feature>
<feature type="sequence variant" id="VAR_072797" description="In GALAC1; dbSNP:rs111033749." evidence="20">
    <original>R</original>
    <variation>C</variation>
    <location>
        <position position="231"/>
    </location>
</feature>
<feature type="sequence variant" id="VAR_002601" description="In GALAC1; 15% of normal activity; dbSNP:rs111033754." evidence="20 22">
    <original>R</original>
    <variation>H</variation>
    <location>
        <position position="231"/>
    </location>
</feature>
<feature type="sequence variant" id="VAR_072798" description="In GALAC1." evidence="19">
    <original>P</original>
    <variation>S</variation>
    <location>
        <position position="244"/>
    </location>
</feature>
<feature type="sequence variant" id="VAR_002602" description="In GALAC1; dbSNP:rs111033757." evidence="4">
    <original>W</original>
    <variation>R</variation>
    <location>
        <position position="249"/>
    </location>
</feature>
<feature type="sequence variant" id="VAR_002603" description="In GALAC1; dbSNP:rs111033755." evidence="4">
    <original>Y</original>
    <variation>C</variation>
    <location>
        <position position="251"/>
    </location>
</feature>
<feature type="sequence variant" id="VAR_002604" description="In GALAC1; dbSNP:rs111033755." evidence="5">
    <original>Y</original>
    <variation>S</variation>
    <location>
        <position position="251"/>
    </location>
</feature>
<feature type="sequence variant" id="VAR_023331" description="In GALAC1; dbSNP:rs111033769." evidence="10">
    <original>Q</original>
    <variation>H</variation>
    <location>
        <position position="252"/>
    </location>
</feature>
<feature type="sequence variant" id="VAR_002605" description="In GALAC1; dbSNP:rs368166217." evidence="4">
    <original>R</original>
    <variation>C</variation>
    <location>
        <position position="258"/>
    </location>
</feature>
<feature type="sequence variant" id="VAR_068548" description="In GALAC1; loss of activity; dbSNP:rs886042070." evidence="17">
    <original>R</original>
    <variation>Q</variation>
    <location>
        <position position="259"/>
    </location>
</feature>
<feature type="sequence variant" id="VAR_002606" description="In GALAC1; mild; dbSNP:rs786204763." evidence="4">
    <original>R</original>
    <variation>W</variation>
    <location>
        <position position="259"/>
    </location>
</feature>
<feature type="sequence variant" id="VAR_002607" description="In GALAC1; dbSNP:rs111033763." evidence="4">
    <original>R</original>
    <variation>P</variation>
    <location>
        <position position="262"/>
    </location>
</feature>
<feature type="sequence variant" id="VAR_008046" description="In GALAC1.">
    <location>
        <position position="263"/>
    </location>
</feature>
<feature type="sequence variant" id="VAR_068549" description="In GALAC1; dbSNP:rs111033764." evidence="12">
    <original>P</original>
    <variation>A</variation>
    <location>
        <position position="265"/>
    </location>
</feature>
<feature type="sequence variant" id="VAR_072799" description="In GALAC1." evidence="19">
    <original>L</original>
    <variation>R</variation>
    <location>
        <position position="267"/>
    </location>
</feature>
<feature type="sequence variant" id="VAR_072800" description="In GALAC1." evidence="19">
    <original>L</original>
    <variation>V</variation>
    <location>
        <position position="267"/>
    </location>
</feature>
<feature type="sequence variant" id="VAR_072801" description="In GALAC1; dbSNP:rs1262475195." evidence="19">
    <original>E</original>
    <variation>D</variation>
    <location>
        <position position="271"/>
    </location>
</feature>
<feature type="sequence variant" id="VAR_008047" description="In GALAC1; dbSNP:rs111033766." evidence="4">
    <original>R</original>
    <variation>G</variation>
    <location>
        <position position="272"/>
    </location>
</feature>
<feature type="sequence variant" id="VAR_068550" description="In GALAC1; 18-fold decrease in activity; dbSNP:rs111033778." evidence="13 17">
    <original>I</original>
    <variation>N</variation>
    <location>
        <position position="278"/>
    </location>
</feature>
<feature type="sequence variant" id="VAR_002608" description="In GALAC1; dbSNP:rs111033772." evidence="4">
    <original>L</original>
    <variation>V</variation>
    <location>
        <position position="282"/>
    </location>
</feature>
<feature type="sequence variant" id="VAR_002609" description="In GALAC1; severe; impairs protein folding; nearly abolishes enzyme activity; dbSNP:rs111033773." evidence="3 5 19 20 21">
    <original>K</original>
    <variation>N</variation>
    <location>
        <position position="285"/>
    </location>
</feature>
<feature type="sequence variant" id="VAR_068829" description="In GALAC1; dbSNP:rs367543263." evidence="18">
    <original>K</original>
    <variation>R</variation>
    <location>
        <position position="285"/>
    </location>
</feature>
<feature type="sequence variant" id="VAR_068551" description="In GALAC1; 3-fold decrease in activity; dbSNP:rs111033774." evidence="13 17">
    <original>L</original>
    <variation>F</variation>
    <location>
        <position position="289"/>
    </location>
</feature>
<feature type="sequence variant" id="VAR_002610" description="In GALAC1; dbSNP:rs111033775." evidence="4">
    <original>L</original>
    <variation>R</variation>
    <location>
        <position position="289"/>
    </location>
</feature>
<feature type="sequence variant" id="VAR_002611" description="In GALAC1; dbSNP:rs111033780." evidence="4">
    <original>E</original>
    <variation>K</variation>
    <location>
        <position position="291"/>
    </location>
</feature>
<feature type="sequence variant" id="VAR_068552" description="In GALAC1; 2-fold decrease in activity; dbSNP:rs111033841." evidence="17">
    <original>E</original>
    <variation>V</variation>
    <location>
        <position position="291"/>
    </location>
</feature>
<feature type="sequence variant" id="VAR_008048" description="In GALAC1; dbSNP:rs111033781." evidence="3">
    <original>F</original>
    <variation>Y</variation>
    <location>
        <position position="294"/>
    </location>
</feature>
<feature type="sequence variant" id="VAR_002612" description="In GALAC1; dbSNP:rs111033784." evidence="4">
    <original>E</original>
    <variation>K</variation>
    <location>
        <position position="308"/>
    </location>
</feature>
<feature type="sequence variant" id="VAR_002613" description="In GALAC1; allele Duarte; exists as allelic variants Duarte-1 and Duarte-2; Duarte-1 has normal or increased activity; Duarte-2 has activity reduced to about 35-45% of normal; dbSNP:rs2070074." evidence="5 9 14 16 18 19 20 22 25 32">
    <original>N</original>
    <variation>D</variation>
    <location>
        <position position="314"/>
    </location>
</feature>
<feature type="sequence variant" id="VAR_002614" description="In GALAC1; dbSNP:rs111033787." evidence="4">
    <original>Q</original>
    <variation>H</variation>
    <location>
        <position position="317"/>
    </location>
</feature>
<feature type="sequence variant" id="VAR_002615" description="In GALAC1; dbSNP:rs111033786." evidence="4">
    <original>Q</original>
    <variation>R</variation>
    <location>
        <position position="317"/>
    </location>
</feature>
<feature type="sequence variant" id="VAR_002616" description="In GALAC1; dbSNP:rs111033792." evidence="18 26 30">
    <original>H</original>
    <variation>Q</variation>
    <location>
        <position position="319"/>
    </location>
</feature>
<feature type="sequence variant" id="VAR_002617" description="In GALAC1; dbSNP:rs111033795." evidence="3">
    <original>A</original>
    <variation>T</variation>
    <location>
        <position position="320"/>
    </location>
</feature>
<feature type="sequence variant" id="VAR_002618" description="In GALAC1; dbSNP:rs111033796." evidence="4">
    <original>Y</original>
    <variation>D</variation>
    <location>
        <position position="323"/>
    </location>
</feature>
<feature type="sequence variant" id="VAR_002619" description="In GALAC1; dbSNP:rs111033796." evidence="4">
    <original>Y</original>
    <variation>H</variation>
    <location>
        <position position="323"/>
    </location>
</feature>
<feature type="sequence variant" id="VAR_002620" description="In GALAC1; dbSNP:rs111033798." evidence="4">
    <original>P</original>
    <variation>S</variation>
    <location>
        <position position="324"/>
    </location>
</feature>
<feature type="sequence variant" id="VAR_002621" description="In GALAC1; dbSNP:rs111033794." evidence="31">
    <original>P</original>
    <variation>L</variation>
    <location>
        <position position="325"/>
    </location>
</feature>
<feature type="sequence variant" id="VAR_068553" description="In GALAC1; results in no detectable protein in the soluble fraction; dbSNP:rs111033832." evidence="17">
    <original>L</original>
    <variation>P</variation>
    <location>
        <position position="327"/>
    </location>
</feature>
<feature type="sequence variant" id="VAR_002622" description="In GALAC1; dbSNP:rs111033802." evidence="4">
    <original>R</original>
    <variation>H</variation>
    <location>
        <position position="328"/>
    </location>
</feature>
<feature type="sequence variant" id="VAR_002623" description="In GALAC1; dbSNP:rs111033803." evidence="28">
    <original>S</original>
    <variation>F</variation>
    <location>
        <position position="329"/>
    </location>
</feature>
<feature type="sequence variant" id="VAR_002624" description="In GALAC1; mild; dbSNP:rs111033804." evidence="27">
    <original>A</original>
    <variation>V</variation>
    <location>
        <position position="330"/>
    </location>
</feature>
<feature type="sequence variant" id="VAR_002625" description="In GALAC1; dbSNP:rs111033800." evidence="4">
    <original>R</original>
    <variation>G</variation>
    <location>
        <position position="333"/>
    </location>
</feature>
<feature type="sequence variant" id="VAR_068830" description="In GALAC1; dbSNP:rs111033808." evidence="18">
    <original>R</original>
    <variation>L</variation>
    <location>
        <position position="333"/>
    </location>
</feature>
<feature type="sequence variant" id="VAR_002626" description="In GALAC1; dbSNP:rs111033808." evidence="4">
    <original>R</original>
    <variation>Q</variation>
    <location>
        <position position="333"/>
    </location>
</feature>
<feature type="sequence variant" id="VAR_002627" description="In GALAC1; no enzymatic activity; dbSNP:rs111033800." evidence="15 19 22">
    <original>R</original>
    <variation>W</variation>
    <location>
        <position position="333"/>
    </location>
</feature>
<feature type="sequence variant" id="VAR_002628" description="In GALAC1; dbSNP:rs111033809." evidence="4">
    <original>K</original>
    <variation>R</variation>
    <location>
        <position position="334"/>
    </location>
</feature>
<feature type="sequence variant" id="VAR_002629" description="In GALAC1; dbSNP:rs111033810." evidence="4">
    <original>M</original>
    <variation>L</variation>
    <location>
        <position position="336"/>
    </location>
</feature>
<feature type="sequence variant" id="VAR_068554" description="In GALAC1; dbSNP:rs111033812." evidence="6">
    <original>L</original>
    <variation>I</variation>
    <location>
        <position position="342"/>
    </location>
</feature>
<feature type="sequence variant" id="VAR_002630" description="In GALAC1; dbSNP:rs111033814." evidence="5">
    <original>Q</original>
    <variation>K</variation>
    <location>
        <position position="344"/>
    </location>
</feature>
<feature type="sequence variant" id="VAR_068555" description="In GALAC1; dbSNP:rs111033815." evidence="5">
    <original>A</original>
    <variation>D</variation>
    <location>
        <position position="345"/>
    </location>
</feature>
<feature type="sequence variant" id="VAR_002631" description="In GALAC1; mild; dbSNP:rs111033817." evidence="4">
    <original>T</original>
    <variation>A</variation>
    <location>
        <position position="350"/>
    </location>
</feature>
<feature type="sequence conflict" description="In Ref. 1; AAC83409." evidence="34" ref="1">
    <original>RR</original>
    <variation>VG</variation>
    <location>
        <begin position="258"/>
        <end position="259"/>
    </location>
</feature>
<feature type="sequence conflict" description="In Ref. 5; BAG64359." evidence="34" ref="5">
    <original>F</original>
    <variation>L</variation>
    <location>
        <position position="335"/>
    </location>
</feature>
<feature type="turn" evidence="37">
    <location>
        <begin position="26"/>
        <end position="28"/>
    </location>
</feature>
<feature type="strand" evidence="38">
    <location>
        <begin position="31"/>
        <end position="35"/>
    </location>
</feature>
<feature type="turn" evidence="38">
    <location>
        <begin position="36"/>
        <end position="39"/>
    </location>
</feature>
<feature type="strand" evidence="38">
    <location>
        <begin position="40"/>
        <end position="44"/>
    </location>
</feature>
<feature type="strand" evidence="38">
    <location>
        <begin position="93"/>
        <end position="96"/>
    </location>
</feature>
<feature type="strand" evidence="38">
    <location>
        <begin position="111"/>
        <end position="114"/>
    </location>
</feature>
<feature type="strand" evidence="38">
    <location>
        <begin position="117"/>
        <end position="119"/>
    </location>
</feature>
<feature type="strand" evidence="38">
    <location>
        <begin position="124"/>
        <end position="131"/>
    </location>
</feature>
<feature type="helix" evidence="38">
    <location>
        <begin position="139"/>
        <end position="141"/>
    </location>
</feature>
<feature type="helix" evidence="38">
    <location>
        <begin position="144"/>
        <end position="162"/>
    </location>
</feature>
<feature type="strand" evidence="38">
    <location>
        <begin position="166"/>
        <end position="175"/>
    </location>
</feature>
<feature type="helix" evidence="38">
    <location>
        <begin position="176"/>
        <end position="178"/>
    </location>
</feature>
<feature type="strand" evidence="38">
    <location>
        <begin position="184"/>
        <end position="194"/>
    </location>
</feature>
<feature type="helix" evidence="38">
    <location>
        <begin position="197"/>
        <end position="213"/>
    </location>
</feature>
<feature type="helix" evidence="38">
    <location>
        <begin position="217"/>
        <end position="228"/>
    </location>
</feature>
<feature type="strand" evidence="38">
    <location>
        <begin position="232"/>
        <end position="235"/>
    </location>
</feature>
<feature type="strand" evidence="38">
    <location>
        <begin position="237"/>
        <end position="242"/>
    </location>
</feature>
<feature type="strand" evidence="38">
    <location>
        <begin position="253"/>
        <end position="259"/>
    </location>
</feature>
<feature type="helix" evidence="38">
    <location>
        <begin position="264"/>
        <end position="266"/>
    </location>
</feature>
<feature type="helix" evidence="38">
    <location>
        <begin position="269"/>
        <end position="289"/>
    </location>
</feature>
<feature type="strand" evidence="38">
    <location>
        <begin position="296"/>
        <end position="301"/>
    </location>
</feature>
<feature type="helix" evidence="38">
    <location>
        <begin position="306"/>
        <end position="308"/>
    </location>
</feature>
<feature type="strand" evidence="38">
    <location>
        <begin position="319"/>
        <end position="323"/>
    </location>
</feature>
<feature type="strand" evidence="38">
    <location>
        <begin position="328"/>
        <end position="331"/>
    </location>
</feature>
<feature type="helix" evidence="38">
    <location>
        <begin position="339"/>
        <end position="342"/>
    </location>
</feature>
<feature type="strand" evidence="38">
    <location>
        <begin position="345"/>
        <end position="349"/>
    </location>
</feature>
<feature type="helix" evidence="38">
    <location>
        <begin position="351"/>
        <end position="360"/>
    </location>
</feature>
<sequence length="379" mass="43363">MSRSGTDPQQRQQASEADAAAATFRANDHQHIRYNPLQDEWVLVSAHRMKRPWQGQVEPQLLKTVPRHDPLNPLCPGAIRANGEVNPQYDSTFLFDNDFPALQPDAPSPGPSDHPLFQAKSARGVCKVMCFHPWSDVTLPLMSVPEIRAVVDAWASVTEELGAQYPWVQIFENKGAMMGCSNPHPHCQVWASSFLPDIAQREERSQQAYKSQHGEPLLMEYSRQELLRKERLVLTSEHWLVLVPFWATWPYQTLLLPRRHVRRLPELTPAERDDLASIMKKLLTKYDNLFETSFPYSMGWHGAPTGSEAGANWNHWQLHAHYYPPLLRSATVRKFMVGYEMLAQAQRDLTPEQAAERLRALPEVHYHLGQKDRETATIA</sequence>
<gene>
    <name type="primary">GALT</name>
</gene>
<accession>P07902</accession>
<accession>B4E097</accession>
<accession>E7ET32</accession>
<accession>Q14355</accession>
<accession>Q14356</accession>
<accession>Q14357</accession>
<accession>Q14358</accession>
<accession>Q14359</accession>
<accession>Q14360</accession>
<accession>Q14361</accession>
<accession>Q14363</accession>
<accession>Q14364</accession>
<accession>Q14365</accession>
<accession>Q14369</accession>
<accession>Q14370</accession>
<accession>Q14371</accession>
<accession>Q14372</accession>
<accession>Q14373</accession>
<accession>Q14374</accession>
<accession>Q14375</accession>
<accession>Q14377</accession>
<accession>Q14378</accession>
<accession>Q14380</accession>
<accession>Q14381</accession>
<accession>Q14382</accession>
<accession>Q14383</accession>
<accession>Q14384</accession>
<accession>Q14385</accession>
<accession>Q14386</accession>
<accession>Q14387</accession>
<accession>Q14389</accession>
<accession>Q16766</accession>
<accession>Q53XK1</accession>
<accession>Q5VZ81</accession>
<accession>Q96BY1</accession>
<reference key="1">
    <citation type="journal article" date="1988" name="Mol. Biol. Med.">
        <title>Cloning and characterization of a cDNA encoding human galactose-1-phosphate uridyl transferase.</title>
        <authorList>
            <person name="Reichardt J.K.V."/>
            <person name="Berg P."/>
        </authorList>
    </citation>
    <scope>NUCLEOTIDE SEQUENCE [MRNA] (ISOFORM 1)</scope>
    <source>
        <tissue>Fibroblast</tissue>
    </source>
</reference>
<reference key="2">
    <citation type="journal article" date="1990" name="Mol. Biol. Med.">
        <title>Sequence of a cDNA encoding human galactose-1-phosphate uridyl transferase.</title>
        <authorList>
            <person name="Flach J.E."/>
            <person name="Reichardt J.K.V."/>
            <person name="Elsas L.J. II"/>
        </authorList>
    </citation>
    <scope>SEQUENCE REVISION</scope>
</reference>
<reference key="3">
    <citation type="journal article" date="1992" name="Genomics">
        <title>The human galactose-1-phosphate uridyltransferase gene.</title>
        <authorList>
            <person name="Leslie N.D."/>
            <person name="Immerman E.B."/>
            <person name="Flach J.E."/>
            <person name="Florez M."/>
            <person name="Fridovich-Keil J.L."/>
            <person name="Elsas L.J."/>
        </authorList>
    </citation>
    <scope>NUCLEOTIDE SEQUENCE [GENOMIC DNA]</scope>
    <scope>VARIANTS GALAC1 THR-81 AND ARG-188</scope>
    <scope>INVOLVEMENT IN GALAC1</scope>
</reference>
<reference key="4">
    <citation type="submission" date="2003-08" db="EMBL/GenBank/DDBJ databases">
        <title>Cloning of human full-length CDSs in BD Creator(TM) system donor vector.</title>
        <authorList>
            <person name="Kalnine N."/>
            <person name="Chen X."/>
            <person name="Rolfs A."/>
            <person name="Halleck A."/>
            <person name="Hines L."/>
            <person name="Eisenstein S."/>
            <person name="Koundinya M."/>
            <person name="Raphael J."/>
            <person name="Moreira D."/>
            <person name="Kelley T."/>
            <person name="LaBaer J."/>
            <person name="Lin Y."/>
            <person name="Phelan M."/>
            <person name="Farmer A."/>
        </authorList>
    </citation>
    <scope>NUCLEOTIDE SEQUENCE [LARGE SCALE MRNA] (ISOFORM 1)</scope>
    <scope>VARIANT ASP-314</scope>
</reference>
<reference key="5">
    <citation type="journal article" date="2004" name="Nat. Genet.">
        <title>Complete sequencing and characterization of 21,243 full-length human cDNAs.</title>
        <authorList>
            <person name="Ota T."/>
            <person name="Suzuki Y."/>
            <person name="Nishikawa T."/>
            <person name="Otsuki T."/>
            <person name="Sugiyama T."/>
            <person name="Irie R."/>
            <person name="Wakamatsu A."/>
            <person name="Hayashi K."/>
            <person name="Sato H."/>
            <person name="Nagai K."/>
            <person name="Kimura K."/>
            <person name="Makita H."/>
            <person name="Sekine M."/>
            <person name="Obayashi M."/>
            <person name="Nishi T."/>
            <person name="Shibahara T."/>
            <person name="Tanaka T."/>
            <person name="Ishii S."/>
            <person name="Yamamoto J."/>
            <person name="Saito K."/>
            <person name="Kawai Y."/>
            <person name="Isono Y."/>
            <person name="Nakamura Y."/>
            <person name="Nagahari K."/>
            <person name="Murakami K."/>
            <person name="Yasuda T."/>
            <person name="Iwayanagi T."/>
            <person name="Wagatsuma M."/>
            <person name="Shiratori A."/>
            <person name="Sudo H."/>
            <person name="Hosoiri T."/>
            <person name="Kaku Y."/>
            <person name="Kodaira H."/>
            <person name="Kondo H."/>
            <person name="Sugawara M."/>
            <person name="Takahashi M."/>
            <person name="Kanda K."/>
            <person name="Yokoi T."/>
            <person name="Furuya T."/>
            <person name="Kikkawa E."/>
            <person name="Omura Y."/>
            <person name="Abe K."/>
            <person name="Kamihara K."/>
            <person name="Katsuta N."/>
            <person name="Sato K."/>
            <person name="Tanikawa M."/>
            <person name="Yamazaki M."/>
            <person name="Ninomiya K."/>
            <person name="Ishibashi T."/>
            <person name="Yamashita H."/>
            <person name="Murakawa K."/>
            <person name="Fujimori K."/>
            <person name="Tanai H."/>
            <person name="Kimata M."/>
            <person name="Watanabe M."/>
            <person name="Hiraoka S."/>
            <person name="Chiba Y."/>
            <person name="Ishida S."/>
            <person name="Ono Y."/>
            <person name="Takiguchi S."/>
            <person name="Watanabe S."/>
            <person name="Yosida M."/>
            <person name="Hotuta T."/>
            <person name="Kusano J."/>
            <person name="Kanehori K."/>
            <person name="Takahashi-Fujii A."/>
            <person name="Hara H."/>
            <person name="Tanase T.-O."/>
            <person name="Nomura Y."/>
            <person name="Togiya S."/>
            <person name="Komai F."/>
            <person name="Hara R."/>
            <person name="Takeuchi K."/>
            <person name="Arita M."/>
            <person name="Imose N."/>
            <person name="Musashino K."/>
            <person name="Yuuki H."/>
            <person name="Oshima A."/>
            <person name="Sasaki N."/>
            <person name="Aotsuka S."/>
            <person name="Yoshikawa Y."/>
            <person name="Matsunawa H."/>
            <person name="Ichihara T."/>
            <person name="Shiohata N."/>
            <person name="Sano S."/>
            <person name="Moriya S."/>
            <person name="Momiyama H."/>
            <person name="Satoh N."/>
            <person name="Takami S."/>
            <person name="Terashima Y."/>
            <person name="Suzuki O."/>
            <person name="Nakagawa S."/>
            <person name="Senoh A."/>
            <person name="Mizoguchi H."/>
            <person name="Goto Y."/>
            <person name="Shimizu F."/>
            <person name="Wakebe H."/>
            <person name="Hishigaki H."/>
            <person name="Watanabe T."/>
            <person name="Sugiyama A."/>
            <person name="Takemoto M."/>
            <person name="Kawakami B."/>
            <person name="Yamazaki M."/>
            <person name="Watanabe K."/>
            <person name="Kumagai A."/>
            <person name="Itakura S."/>
            <person name="Fukuzumi Y."/>
            <person name="Fujimori Y."/>
            <person name="Komiyama M."/>
            <person name="Tashiro H."/>
            <person name="Tanigami A."/>
            <person name="Fujiwara T."/>
            <person name="Ono T."/>
            <person name="Yamada K."/>
            <person name="Fujii Y."/>
            <person name="Ozaki K."/>
            <person name="Hirao M."/>
            <person name="Ohmori Y."/>
            <person name="Kawabata A."/>
            <person name="Hikiji T."/>
            <person name="Kobatake N."/>
            <person name="Inagaki H."/>
            <person name="Ikema Y."/>
            <person name="Okamoto S."/>
            <person name="Okitani R."/>
            <person name="Kawakami T."/>
            <person name="Noguchi S."/>
            <person name="Itoh T."/>
            <person name="Shigeta K."/>
            <person name="Senba T."/>
            <person name="Matsumura K."/>
            <person name="Nakajima Y."/>
            <person name="Mizuno T."/>
            <person name="Morinaga M."/>
            <person name="Sasaki M."/>
            <person name="Togashi T."/>
            <person name="Oyama M."/>
            <person name="Hata H."/>
            <person name="Watanabe M."/>
            <person name="Komatsu T."/>
            <person name="Mizushima-Sugano J."/>
            <person name="Satoh T."/>
            <person name="Shirai Y."/>
            <person name="Takahashi Y."/>
            <person name="Nakagawa K."/>
            <person name="Okumura K."/>
            <person name="Nagase T."/>
            <person name="Nomura N."/>
            <person name="Kikuchi H."/>
            <person name="Masuho Y."/>
            <person name="Yamashita R."/>
            <person name="Nakai K."/>
            <person name="Yada T."/>
            <person name="Nakamura Y."/>
            <person name="Ohara O."/>
            <person name="Isogai T."/>
            <person name="Sugano S."/>
        </authorList>
    </citation>
    <scope>NUCLEOTIDE SEQUENCE [LARGE SCALE MRNA] (ISOFORM 2)</scope>
    <source>
        <tissue>Thymus</tissue>
    </source>
</reference>
<reference key="6">
    <citation type="journal article" date="2004" name="Nature">
        <title>DNA sequence and analysis of human chromosome 9.</title>
        <authorList>
            <person name="Humphray S.J."/>
            <person name="Oliver K."/>
            <person name="Hunt A.R."/>
            <person name="Plumb R.W."/>
            <person name="Loveland J.E."/>
            <person name="Howe K.L."/>
            <person name="Andrews T.D."/>
            <person name="Searle S."/>
            <person name="Hunt S.E."/>
            <person name="Scott C.E."/>
            <person name="Jones M.C."/>
            <person name="Ainscough R."/>
            <person name="Almeida J.P."/>
            <person name="Ambrose K.D."/>
            <person name="Ashwell R.I.S."/>
            <person name="Babbage A.K."/>
            <person name="Babbage S."/>
            <person name="Bagguley C.L."/>
            <person name="Bailey J."/>
            <person name="Banerjee R."/>
            <person name="Barker D.J."/>
            <person name="Barlow K.F."/>
            <person name="Bates K."/>
            <person name="Beasley H."/>
            <person name="Beasley O."/>
            <person name="Bird C.P."/>
            <person name="Bray-Allen S."/>
            <person name="Brown A.J."/>
            <person name="Brown J.Y."/>
            <person name="Burford D."/>
            <person name="Burrill W."/>
            <person name="Burton J."/>
            <person name="Carder C."/>
            <person name="Carter N.P."/>
            <person name="Chapman J.C."/>
            <person name="Chen Y."/>
            <person name="Clarke G."/>
            <person name="Clark S.Y."/>
            <person name="Clee C.M."/>
            <person name="Clegg S."/>
            <person name="Collier R.E."/>
            <person name="Corby N."/>
            <person name="Crosier M."/>
            <person name="Cummings A.T."/>
            <person name="Davies J."/>
            <person name="Dhami P."/>
            <person name="Dunn M."/>
            <person name="Dutta I."/>
            <person name="Dyer L.W."/>
            <person name="Earthrowl M.E."/>
            <person name="Faulkner L."/>
            <person name="Fleming C.J."/>
            <person name="Frankish A."/>
            <person name="Frankland J.A."/>
            <person name="French L."/>
            <person name="Fricker D.G."/>
            <person name="Garner P."/>
            <person name="Garnett J."/>
            <person name="Ghori J."/>
            <person name="Gilbert J.G.R."/>
            <person name="Glison C."/>
            <person name="Grafham D.V."/>
            <person name="Gribble S."/>
            <person name="Griffiths C."/>
            <person name="Griffiths-Jones S."/>
            <person name="Grocock R."/>
            <person name="Guy J."/>
            <person name="Hall R.E."/>
            <person name="Hammond S."/>
            <person name="Harley J.L."/>
            <person name="Harrison E.S.I."/>
            <person name="Hart E.A."/>
            <person name="Heath P.D."/>
            <person name="Henderson C.D."/>
            <person name="Hopkins B.L."/>
            <person name="Howard P.J."/>
            <person name="Howden P.J."/>
            <person name="Huckle E."/>
            <person name="Johnson C."/>
            <person name="Johnson D."/>
            <person name="Joy A.A."/>
            <person name="Kay M."/>
            <person name="Keenan S."/>
            <person name="Kershaw J.K."/>
            <person name="Kimberley A.M."/>
            <person name="King A."/>
            <person name="Knights A."/>
            <person name="Laird G.K."/>
            <person name="Langford C."/>
            <person name="Lawlor S."/>
            <person name="Leongamornlert D.A."/>
            <person name="Leversha M."/>
            <person name="Lloyd C."/>
            <person name="Lloyd D.M."/>
            <person name="Lovell J."/>
            <person name="Martin S."/>
            <person name="Mashreghi-Mohammadi M."/>
            <person name="Matthews L."/>
            <person name="McLaren S."/>
            <person name="McLay K.E."/>
            <person name="McMurray A."/>
            <person name="Milne S."/>
            <person name="Nickerson T."/>
            <person name="Nisbett J."/>
            <person name="Nordsiek G."/>
            <person name="Pearce A.V."/>
            <person name="Peck A.I."/>
            <person name="Porter K.M."/>
            <person name="Pandian R."/>
            <person name="Pelan S."/>
            <person name="Phillimore B."/>
            <person name="Povey S."/>
            <person name="Ramsey Y."/>
            <person name="Rand V."/>
            <person name="Scharfe M."/>
            <person name="Sehra H.K."/>
            <person name="Shownkeen R."/>
            <person name="Sims S.K."/>
            <person name="Skuce C.D."/>
            <person name="Smith M."/>
            <person name="Steward C.A."/>
            <person name="Swarbreck D."/>
            <person name="Sycamore N."/>
            <person name="Tester J."/>
            <person name="Thorpe A."/>
            <person name="Tracey A."/>
            <person name="Tromans A."/>
            <person name="Thomas D.W."/>
            <person name="Wall M."/>
            <person name="Wallis J.M."/>
            <person name="West A.P."/>
            <person name="Whitehead S.L."/>
            <person name="Willey D.L."/>
            <person name="Williams S.A."/>
            <person name="Wilming L."/>
            <person name="Wray P.W."/>
            <person name="Young L."/>
            <person name="Ashurst J.L."/>
            <person name="Coulson A."/>
            <person name="Blocker H."/>
            <person name="Durbin R.M."/>
            <person name="Sulston J.E."/>
            <person name="Hubbard T."/>
            <person name="Jackson M.J."/>
            <person name="Bentley D.R."/>
            <person name="Beck S."/>
            <person name="Rogers J."/>
            <person name="Dunham I."/>
        </authorList>
    </citation>
    <scope>NUCLEOTIDE SEQUENCE [LARGE SCALE GENOMIC DNA]</scope>
</reference>
<reference key="7">
    <citation type="submission" date="2005-09" db="EMBL/GenBank/DDBJ databases">
        <authorList>
            <person name="Mural R.J."/>
            <person name="Istrail S."/>
            <person name="Sutton G.G."/>
            <person name="Florea L."/>
            <person name="Halpern A.L."/>
            <person name="Mobarry C.M."/>
            <person name="Lippert R."/>
            <person name="Walenz B."/>
            <person name="Shatkay H."/>
            <person name="Dew I."/>
            <person name="Miller J.R."/>
            <person name="Flanigan M.J."/>
            <person name="Edwards N.J."/>
            <person name="Bolanos R."/>
            <person name="Fasulo D."/>
            <person name="Halldorsson B.V."/>
            <person name="Hannenhalli S."/>
            <person name="Turner R."/>
            <person name="Yooseph S."/>
            <person name="Lu F."/>
            <person name="Nusskern D.R."/>
            <person name="Shue B.C."/>
            <person name="Zheng X.H."/>
            <person name="Zhong F."/>
            <person name="Delcher A.L."/>
            <person name="Huson D.H."/>
            <person name="Kravitz S.A."/>
            <person name="Mouchard L."/>
            <person name="Reinert K."/>
            <person name="Remington K.A."/>
            <person name="Clark A.G."/>
            <person name="Waterman M.S."/>
            <person name="Eichler E.E."/>
            <person name="Adams M.D."/>
            <person name="Hunkapiller M.W."/>
            <person name="Myers E.W."/>
            <person name="Venter J.C."/>
        </authorList>
    </citation>
    <scope>NUCLEOTIDE SEQUENCE [LARGE SCALE GENOMIC DNA]</scope>
</reference>
<reference key="8">
    <citation type="journal article" date="2004" name="Genome Res.">
        <title>The status, quality, and expansion of the NIH full-length cDNA project: the Mammalian Gene Collection (MGC).</title>
        <authorList>
            <consortium name="The MGC Project Team"/>
        </authorList>
    </citation>
    <scope>NUCLEOTIDE SEQUENCE [LARGE SCALE MRNA] (ISOFORM 1)</scope>
    <scope>VARIANT ASP-314</scope>
    <source>
        <tissue>Skin</tissue>
    </source>
</reference>
<reference key="9">
    <citation type="journal article" date="1992" name="Hum. Mutat.">
        <title>Genetic basis of galactosemia.</title>
        <authorList>
            <person name="Reichardt J.K.V."/>
        </authorList>
    </citation>
    <scope>REVIEW ON GALAC1 MUTATIONS</scope>
</reference>
<reference key="10">
    <citation type="journal article" date="2012" name="Hum. Mutat.">
        <title>Correlation assessment among clinical phenotypes, expression analysis and molecular modeling of 14 novel variations in the human galactose-1-phosphate uridylyltransferase gene.</title>
        <authorList>
            <person name="Tang M."/>
            <person name="Facchiano A."/>
            <person name="Rachamadugu R."/>
            <person name="Calderon F."/>
            <person name="Mao R."/>
            <person name="Milanesi L."/>
            <person name="Marabotti A."/>
            <person name="Lai K."/>
        </authorList>
    </citation>
    <scope>FUNCTION</scope>
    <scope>PATHWAY</scope>
    <scope>CATALYTIC ACTIVITY</scope>
    <scope>BIOPHYSICOCHEMICAL PROPERTIES</scope>
    <scope>VARIANTS GALAC1 ASN-34; GLN-132; LEU-168; THR-170; PRO-227; GLN-259; VAL-291 AND PRO-327</scope>
    <scope>CHARACTERIZATION OF VARIANTS GALAC1 ASN-34; GLN-132; LEU-135; LEU-168; THR-170; HIS-185; ARG-188; CYS-201; LYS-220; SER-223; PRO-227; GLN-259; ASN-278; PHE-289; VAL-291 AND PRO-327</scope>
</reference>
<reference evidence="36" key="11">
    <citation type="journal article" date="2016" name="Hum. Mol. Genet.">
        <title>Molecular basis of classic galactosemia from the structure of human galactose 1-phosphate uridylyltransferase.</title>
        <authorList>
            <person name="McCorvie T.J."/>
            <person name="Kopec J."/>
            <person name="Pey A.L."/>
            <person name="Fitzpatrick F."/>
            <person name="Patel D."/>
            <person name="Chalk R."/>
            <person name="Shrestha L."/>
            <person name="Yue W.W."/>
        </authorList>
    </citation>
    <scope>X-RAY CRYSTALLOGRAPHY (1.73 ANGSTROMS) IN COMPLEX WITH GLUCOSE-1-PHOSPHATE; UMP AND ZINC IONS</scope>
    <scope>FUNCTION</scope>
    <scope>PATHWAY</scope>
    <scope>CATALYTIC ACTIVITY</scope>
    <scope>COFACTOR</scope>
    <scope>SUBUNIT</scope>
    <scope>ACTIVE SITE</scope>
    <scope>CHARACTERIZATION OF VARIANT GALAC1 ARG-188 AND ASN-285</scope>
</reference>
<reference key="12">
    <citation type="journal article" date="1991" name="Am. J. Hum. Genet.">
        <title>Molecular characterization of two galactosemia mutations: correlation of mutations with highly conserved domains in galactose-1-phosphate uridyl transferase.</title>
        <authorList>
            <person name="Reichardt J.K.V."/>
            <person name="Packman S."/>
            <person name="Woo S.L.C."/>
        </authorList>
    </citation>
    <scope>VARIANTS GALAC1 ARG-188 AND TRP-333</scope>
</reference>
<reference key="13">
    <citation type="journal article" date="1991" name="Proc. Natl. Acad. Sci. U.S.A.">
        <title>Molecular basis of galactosemia: mutations and polymorphisms in the gene encoding human galactose-1-phosphate uridylyltransferase.</title>
        <authorList>
            <person name="Reichardt J.K.V."/>
            <person name="Woo S.L.C."/>
        </authorList>
    </citation>
    <scope>VARIANTS GALAC1 MET-44 AND LYS-142</scope>
    <scope>VARIANTS MET-62 AND ASP-314</scope>
</reference>
<reference key="14">
    <citation type="journal article" date="1991" name="Proc. Natl. Acad. Sci. U.S.A.">
        <authorList>
            <person name="Reichardt J.K.V."/>
            <person name="Woo S.L.C."/>
        </authorList>
    </citation>
    <scope>ERRATUM OF PUBMED:2011574</scope>
</reference>
<reference key="15">
    <citation type="journal article" date="1992" name="Biochemistry">
        <title>Molecular characterization of two galactosemia mutations and one polymorphism: implications for structure-function analysis of human galactose-1-phosphate uridyltransferase.</title>
        <authorList>
            <person name="Reichardt J.K.V."/>
            <person name="Levy H.L."/>
            <person name="Woo S.L.C."/>
        </authorList>
    </citation>
    <scope>VARIANTS GALAC1 PRO-74 AND SER-171</scope>
    <scope>VARIANT LEU-135</scope>
</reference>
<reference key="16">
    <citation type="journal article" date="1992" name="Genomics">
        <title>Characterization of two missense mutations in human galactose-1-phosphate uridyltransferase: different molecular mechanisms for galactosemia.</title>
        <authorList>
            <person name="Reichardt J.K.V."/>
            <person name="Belmont J.W."/>
            <person name="Levy H.L."/>
            <person name="Woo S.L.C."/>
        </authorList>
    </citation>
    <scope>VARIANTS GALAC1 TRP-148 AND PRO-195</scope>
</reference>
<reference key="17">
    <citation type="journal article" date="1993" name="Hum. Mol. Genet.">
        <title>Molecular characterization of the H319Q galactosemia mutation.</title>
        <authorList>
            <person name="Reichardt J.K.V."/>
            <person name="Novelli G."/>
            <person name="Dallapiccola B."/>
        </authorList>
    </citation>
    <scope>VARIANT GALAC1 GLN-319</scope>
</reference>
<reference key="18">
    <citation type="journal article" date="1994" name="Hum. Genet.">
        <title>On the molecular nature of the Duarte variant of galactose-1-phosphate uridyl transferase (GALT).</title>
        <authorList>
            <person name="Lin H.-C."/>
            <person name="Kirby L.T."/>
            <person name="Ng W.G."/>
            <person name="Reichardt J.K.V."/>
        </authorList>
    </citation>
    <scope>VARIANT GALAC1 ASP-314</scope>
</reference>
<reference key="19">
    <citation type="journal article" date="1995" name="Am. J. Hum. Genet.">
        <title>Galactosemia: a strategy to identify new biochemical phenotypes and molecular genotypes.</title>
        <authorList>
            <person name="Elsas L.J."/>
            <person name="Langley S.D."/>
            <person name="Steele E."/>
            <person name="Evinger J."/>
            <person name="Frodovich-Keil J.L."/>
            <person name="Brown A."/>
            <person name="Singh R."/>
            <person name="Fernhoff P."/>
            <person name="Hjelm L.N."/>
            <person name="Dembure P.P."/>
        </authorList>
    </citation>
    <scope>VARIANTS GALAC1</scope>
</reference>
<reference key="20">
    <citation type="journal article" date="1995" name="Am. J. Hum. Genet.">
        <title>Identification and functional analysis of three distinct mutations in the human galactose-1-phosphate uridyltransferase gene associated with galactosemia in a single family.</title>
        <authorList>
            <person name="Fridovich-Keil J.L."/>
            <person name="Langley S.D."/>
            <person name="Mazur L.A."/>
            <person name="Lennon J.C."/>
            <person name="Dembure P.P."/>
            <person name="Elsas L.J. II"/>
        </authorList>
    </citation>
    <scope>VARIANTS GALAC1 LEU-135; ALA-151 AND ARG-188</scope>
</reference>
<reference key="21">
    <citation type="journal article" date="1995" name="J. Inherit. Metab. Dis.">
        <title>Mutations in the galactose-1-phosphate uridyltransferase gene of two families with mild galactosaemia variants.</title>
        <authorList>
            <person name="Sommer M."/>
            <person name="Gathof B.S."/>
            <person name="Podskarbi T."/>
            <person name="Giugliani R."/>
            <person name="Kleinlein B."/>
            <person name="Shin Y.S."/>
        </authorList>
    </citation>
    <scope>VARIANTS GALAC1 CYS-67 AND VAL-330</scope>
</reference>
<reference key="22">
    <citation type="journal article" date="1995" name="Hum. Mutat.">
        <title>Molecular characterization of galactosemia (type 1) mutations in Japanese.</title>
        <authorList>
            <person name="Ashino J."/>
            <person name="Okano Y."/>
            <person name="Suyama I."/>
            <person name="Yamazaki T."/>
            <person name="Yoshino M."/>
            <person name="Furuyama J."/>
            <person name="Lin H.-C."/>
            <person name="Reichardt J.K.V."/>
            <person name="Isshiki G."/>
        </authorList>
    </citation>
    <scope>VARIANTS GALAC1 HIS-231 AND TRP-333</scope>
    <scope>VARIANT ASP-314</scope>
</reference>
<reference key="23">
    <citation type="journal article" date="1996" name="Eur. J. Pediatr.">
        <title>Three missense mutations in the galactose-1-phosphate uridyltransferase gene of three families with mild galactosaemia.</title>
        <authorList>
            <person name="Shin Y.S."/>
            <person name="Gathof B.S."/>
            <person name="Podskarbi T."/>
            <person name="Sommer M."/>
            <person name="Giugliani R."/>
            <person name="Gresser U."/>
        </authorList>
    </citation>
    <scope>VARIANTS GALAC1 CYS-55 AND PHE-329</scope>
</reference>
<reference key="24">
    <citation type="journal article" date="1996" name="Hum. Mutat.">
        <title>Three new mutations (P183T, V150L, 528insG) and eleven sequence polymorphisms in Italian patients with galactose-1-phosphate uridyltransferase (GALT) deficiency.</title>
        <authorList>
            <person name="Maceratesi P."/>
            <person name="Sangiuolo F."/>
            <person name="Novelli G."/>
            <person name="Ninfali P."/>
            <person name="Magnani M."/>
            <person name="Reichardt J.K.V."/>
            <person name="Dallapiccola B."/>
        </authorList>
    </citation>
    <scope>VARIANTS GALAC1 LEU-150; THR-183; ARG-188 AND GLN-319</scope>
</reference>
<reference key="25">
    <citation type="journal article" date="1996" name="J. Neurol.">
        <title>Molecular basis of galactose-1-phosphate uridyltransferase deficiency involving skeletal muscle.</title>
        <authorList>
            <person name="Ninfali P."/>
            <person name="Bresolin N."/>
            <person name="Dallapiccola B."/>
            <person name="Novelli G."/>
        </authorList>
    </citation>
    <scope>VARIANT GALAC1 THR-183</scope>
</reference>
<reference key="26">
    <citation type="journal article" date="1997" name="Hum. Mutat.">
        <title>Molecular heterogeneity of classical and Duarte galactosemia: mutation analysis by denaturing gradient gel electrophoresis.</title>
        <authorList>
            <person name="Greber-Platzer S."/>
            <person name="Guldberg P."/>
            <person name="Scheibenreiter S."/>
            <person name="Item C."/>
            <person name="Schuller E."/>
            <person name="Patel N."/>
            <person name="Strobl W."/>
        </authorList>
    </citation>
    <scope>VARIANTS GALAC1 TYR-28; ASN-32; PRO-38; GLY-123; LEU-143 AND LEU-325</scope>
</reference>
<reference key="27">
    <citation type="journal article" date="1999" name="Hum. Mutat.">
        <title>Identification of mutations in the galactose-1-phosphate uridyltransferase (GALT) gene in 16 Turkish patients with galactosemia, including a novel mutation of F294Y.</title>
        <authorList>
            <person name="Seyrantepe V."/>
            <person name="Ozguc M."/>
            <person name="Coskun T."/>
            <person name="Ozalp I."/>
            <person name="Reichardt J.K.V."/>
        </authorList>
    </citation>
    <scope>VARIANTS GALAC1 LYS-142; ASN-285; TYR-294 AND THR-320</scope>
</reference>
<reference key="28">
    <citation type="journal article" date="1999" name="Hum. Mutat.">
        <title>Classical galactosemia and mutations at the galactose-1-phosphate uridyl transferase 'GALT' gene.</title>
        <authorList>
            <person name="Tyfield L."/>
            <person name="Reichardt J."/>
            <person name="Fridovich-Keil J."/>
            <person name="Croke D.T."/>
            <person name="Elsas L.J. II"/>
            <person name="Strobl W."/>
            <person name="Kozak L."/>
            <person name="Coskun T."/>
            <person name="Novelli G."/>
            <person name="Okano Y."/>
            <person name="Zekanowski C."/>
            <person name="Shin Y."/>
            <person name="Boleda M.D."/>
        </authorList>
    </citation>
    <scope>VARIANTS GALAC1 LEU-45; LEU-51; ASN-98; ASN-113; LEU-114; SER-117; HIS-118; GLN-123; ALA-125; GLU-127; TYR-130; TYR-132; PRO-139; VAL-142; GLY-154; ARG-167; ASP-179; ASN-192; LEU-194; MET-198; THR-198; THR-199; HIS-201; LYS-203; PRO-204; SER-209; CYS-209; PRO-217; PRO-226; ARG-249; CYS-251; CYS-258; TRP-259; PRO-262; GLY-272; VAL-282; ARG-289; LYS-291; LYS-308; ARG-317; HIS-317; ASP-323; HIS-323; SER-324; HIS-328; GLN-333; GLY-333; ARG-334; LEU-336 AND ALA-350</scope>
</reference>
<reference key="29">
    <citation type="journal article" date="2002" name="Hum. Mutat.">
        <title>Molecular analysis in newborns from Texas affected with galactosemia.</title>
        <authorList>
            <person name="Yang Y.P."/>
            <person name="Corley N."/>
            <person name="Garcia-Heras J."/>
        </authorList>
    </citation>
    <scope>VARIANTS GALAC1 ALA-23; LEU-135; MET-138; GLN-184; ARG-188; PRO-195; SER-251; ASN-285; LYS-344 AND ASP-345</scope>
    <scope>VARIANT ASP-314</scope>
</reference>
<reference key="30">
    <citation type="journal article" date="2002" name="Pediatr. Res.">
        <title>Mutations at the galactose-1-p-uridyltransferase gene in infants with a positive galactosemia newborn screening test.</title>
        <authorList>
            <person name="Item C."/>
            <person name="Hagerty B.P."/>
            <person name="Muhl A."/>
            <person name="Greber-Platzer S."/>
            <person name="Stockler-Ipsiroglu S."/>
            <person name="Strobl W."/>
        </authorList>
    </citation>
    <scope>VARIANTS GALAC1 HIS-9; THR-129 AND ILE-342</scope>
</reference>
<reference key="31">
    <citation type="journal article" date="2005" name="Hum. Mutat.">
        <title>Identification of novel mutations in classical galactosemia.</title>
        <authorList>
            <person name="Bosch A.M."/>
            <person name="Ijlst L."/>
            <person name="Oostheim W."/>
            <person name="Mulders J."/>
            <person name="Bakker H.D."/>
            <person name="Wijburg F.A."/>
            <person name="Wanders R.J."/>
            <person name="Waterham H.R."/>
        </authorList>
    </citation>
    <scope>VARIANTS GALAC1 GLN-51; TRP-135; ASN-229 AND HIS-252</scope>
</reference>
<reference key="32">
    <citation type="journal article" date="2006" name="J. Inherit. Metab. Dis.">
        <title>Mutational spectrum of classical galactosaemia in Spain and Portugal.</title>
        <authorList>
            <person name="Gort L."/>
            <person name="Boleda M.D."/>
            <person name="Tyfield L."/>
            <person name="Vilarinho L."/>
            <person name="Rivera I."/>
            <person name="Cardoso M.L."/>
            <person name="Santos-Leite M."/>
            <person name="Giros M."/>
            <person name="Briones P."/>
        </authorList>
    </citation>
    <scope>VARIANTS GALAC1 HIS-28; HIS-33; ALA-181; SER-185; GLY-192 AND ALA-265</scope>
</reference>
<reference key="33">
    <citation type="journal article" date="2007" name="J. Inherit. Metab. Dis.">
        <title>Combination of enzyme analysis, allele-specific PCR and sequencing to detect mutations in the GALT gene.</title>
        <authorList>
            <person name="Calderon F.R."/>
            <person name="Nelson L."/>
            <person name="Dobrowolski P."/>
            <person name="Sinitsyna I."/>
            <person name="Phansalkar A."/>
            <person name="Longo N."/>
            <person name="Pasquali M."/>
            <person name="Mao R."/>
        </authorList>
    </citation>
    <scope>VARIANTS GALAC1 HIS-185; CYS-201; LYS-220; SER-223; ASN-278 AND PHE-289</scope>
</reference>
<reference key="34">
    <citation type="journal article" date="2008" name="J. Inherit. Metab. Dis.">
        <title>Low allelic heterogeneity in a sample of Mexican patients with classical galactosaemia.</title>
        <authorList>
            <person name="Velazquez-Aragon J."/>
            <person name="Alcantara-Ortigoza M.A."/>
            <person name="Vela-Amieva M."/>
            <person name="Monroy S."/>
            <person name="Martinez-Cruz V."/>
            <person name="Todd-Quinones C."/>
            <person name="Gonzalez-del Angel A."/>
        </authorList>
    </citation>
    <scope>VARIANTS GALAC1 ARG-112 AND ARG-188</scope>
    <scope>VARIANT ASP-314</scope>
</reference>
<reference key="35">
    <citation type="journal article" date="2012" name="Clin. Chim. Acta">
        <title>Biochemical and molecular characterization of GALT gene from Indian galactosemia patients: Identification of 10 novel mutations and their structural and functional implications.</title>
        <authorList>
            <person name="Singh R."/>
            <person name="Thapa B.R."/>
            <person name="Kaur G."/>
            <person name="Prasad R."/>
        </authorList>
    </citation>
    <scope>VARIANTS GALAC1 HIS-89; ARG-103; ALA-166; SER-171; PHE-181; LEU-185; ARG-188; ARG-285; GLN-319 AND LEU-333</scope>
    <scope>VARIANT ASP-314</scope>
</reference>
<reference key="36">
    <citation type="journal article" date="2014" name="Mol. Genet. Genomic Med.">
        <title>Functional and structural impact of the most prevalent missense mutations in classic galactosemia.</title>
        <authorList>
            <person name="Coelho A.I."/>
            <person name="Trabuco M."/>
            <person name="Ramos R."/>
            <person name="Silva M.J."/>
            <person name="Tavares de Almeida I."/>
            <person name="Leandro P."/>
            <person name="Rivera I."/>
            <person name="Vicente J.B."/>
        </authorList>
    </citation>
    <scope>VARIANTS GALAC1 LEU-135; GLN-148; ASP-175; SER-185; ARG-188; CYS-231; HIS-231; ASN-285 AND ASP-314</scope>
    <scope>CHARACTERIZATION OF VARIANTS GALAC1 LEU-135; ASP-175 AND ARG-188</scope>
</reference>
<reference key="37">
    <citation type="journal article" date="2015" name="Gene">
        <title>Clinical and molecular spectra in galactosemic patients from neonatal screening in northeastern Italy: Structural and functional characterization of new variations in the galactose-1-phosphate uridyltransferase (GALT) gene.</title>
        <authorList>
            <person name="Viggiano E."/>
            <person name="Marabotti A."/>
            <person name="Burlina A.P."/>
            <person name="Cazzorla C."/>
            <person name="D'Apice M.R."/>
            <person name="Giordano L."/>
            <person name="Fasan I."/>
            <person name="Novelli G."/>
            <person name="Facchiano A."/>
            <person name="Burlina A.B."/>
        </authorList>
    </citation>
    <scope>VARIANTS GALAC1 PRO-33; ASN-34; VAL-83; THR-142; ARG-188; SER-244; ARG-267; VAL-267; ASP-271; ASN-285; ASP-314 AND TRP-333</scope>
</reference>